<protein>
    <recommendedName>
        <fullName>Bromodomain adjacent to zinc finger domain protein 2B</fullName>
    </recommendedName>
    <alternativeName>
        <fullName>hWALp4</fullName>
    </alternativeName>
</protein>
<name>BAZ2B_HUMAN</name>
<accession>Q9UIF8</accession>
<accession>D3DPA8</accession>
<accession>Q96EA1</accession>
<accession>Q96SQ8</accession>
<accession>Q9P252</accession>
<accession>Q9Y4N8</accession>
<sequence>MESGERLPSSAASSTTPTSSSTPSVASVVSKGGLSTGVASLSSTINPCGHLFRTAGDQPFNLSTVSSAFPMVSHPVFGLHSASSGHSEFGGLGTLGTPTALAAHPQLASFPGAEWWRTTDAHTRTGATFFPPLLGIPPLFAPPAQNHDSSSFHSRTSGKSNRNGPEKGVNGSINGSNTSSVIGINTSVLSTTASSSMGQTKSTSSGGGNRKCNQEQSKNQPLDARVDKIKDKKPRKKAMESSSNSDSDSGTSSDTSSEGISSSDSDDLEEDEEEEDQSIEESEDDDSDSESEAQHKSNNQVLLHGISDPKADGQKATEKAQEKRIHQPLPLASESQTHSFQSQQKQPQVLSQQLPFIFQSSQAKEESVNKHTSVIQSTGLVSNVKPLSLVNQAKKETYMKLIVPSPDVLKAGNKNTSEESSLLTSELRSKREQYKQAFPSQLKKQESSKSLKKVIAALSNPKATSSSPAHPKQTLENNHPNPFLTNALLGNHQPNGVIQSVIQEAPLALTTKTKMQSKINENIAAASSTPFSSPVNLSTSGRRTPGNQTPVMPSASPILHSQGKEKAVSNNVNPVKTQHHSHPAKSLVEQFRGTDSDIPSSKDSEDSNEDEEEDDEEEDEEDDEDDESDDSQSESDSNSESDTEGSEEEDDDDKDQDESDSDTEGEKTSMKLNKTTSSVKSPSMSLTGHSTPRNLHIAKAPGSAPAALCSESQSPAFLGTSSSTLTSSPHSGTSKRRRVTDERELRIPLEYGWQRETRIRNFGGRLQGEVAYYAPCGKKLRQYPEVIKYLSRNGIMDISRDNFSFSAKIRVGDFYEARDGPQGMQWCLLKEEDVIPRIRAMEGRRGRPPNPDRQRAREESRMRRRKGRPPNVGNAEFLDNADAKLLRKLQAQEIARQAAQIKLLRKLQKQEQARVAKEAKKQQAIMAAEEKRKQKEQIKIMKQQEKIKRIQQIRMEKELRAQQILEAKKKKKEEAANAKLLEAEKRIKEKEMRRQQAVLLKHQERERRRQHMMLMKAMEARKKAEEKERLKQEKRDEKRLNKERKLEQRRLELEMAKELKKPNEDMCLADQKPLPELPRIPGLVLSGSTFSDCLMVVQFLRNFGKVLGFDVNIDVPNLSVLQEGLLNIGDSMGEVQDLLVRLLSAAVCDPGLITGYKAKTALGEHLLNVGVNRDNVSEILQIFMEAHCGQTELTESLKTKAFQAHTPAQKASVLAFLINELACSKSVVSEIDKNIDYMSNLRRDKWVVEGKLRKLRIIHAKKTGKRDTSGGIDLGEEQHPLGTPTPGRKRRRKGGDSDYDDDDDDDSDDQGDEDDEDEEDKEDKKGKKTDICEDEDEGDQAASVEELEKQIEKLSKQQSQYRRKLFDASHSLRSVMFGQDRYRRRYWILPQCGGIFVEGMESGEGLEEIAKEREKLKKAESVQIKEEMFETSGDSLNCSNTDHCEQKEDLKEKDNTNLFLQKPGSFSKLSKLLEVAKMPPESEVMTPKPNAGANGCTLSYQNSGKHSLGSVQSTATQSNVEKADSNNLFNTGSSGPGKFYSPLPNDQLLKTLTEKNRQWFSLLPRTPCDDTSLTHADMSTASLVTPQSQPPSKSPSPTPAPLGSSAQNPVGLNPFALSPLQVKGGVSMMGLQFCGWPTGVVTSNIPFTSSVPSLGSGLGLSEGNGNSFLTSNVASSKSESPVPQNEKATSAQPAAVEVAKPVDFPSPKPIPEEMQFGWWRIIDPEDLKALLKVLHLRGIREKALQKQIQKHLDYITQACLKNKDVAIIELNENEENQVTRDIVENWSVEEQAMEMDLSVLQQVEDLERRVASASLQVKGWMCPEPASEREDLVYFEHKSFTKLCKEHDGEFTGEDESSAHALERKSDNPLDIAVTRLADLERNIERRIEEDIAPGLRVWRRALSEARSAAQVALCIQQLQKSIAWEKSIMKVYCQICRKGDNEELLLLCDGCDKGCHTYCHRPKITTIPDGDWFCPACIAKASGQTLKIKKLHVKGKKTNESKKGKKVTLTGDTEDEDSASTSSSLKRGNKDLKKRKMEENTSINLSKQESFTSVKKPKRDDSKDLALCSMILTEMETHEDAWPFLLPVNLKLVPGYKKVIKKPMDFSTIREKLSSGQYPNLETFALDVRLVFDNCETFNEDDSDIGRAGHNMRKYFEKKWTDTFKVS</sequence>
<feature type="chain" id="PRO_0000211174" description="Bromodomain adjacent to zinc finger domain protein 2B">
    <location>
        <begin position="1"/>
        <end position="2168"/>
    </location>
</feature>
<feature type="domain" description="MBD" evidence="6">
    <location>
        <begin position="739"/>
        <end position="810"/>
    </location>
</feature>
<feature type="domain" description="DDT" evidence="4">
    <location>
        <begin position="1087"/>
        <end position="1152"/>
    </location>
</feature>
<feature type="domain" description="Bromo" evidence="3">
    <location>
        <begin position="2060"/>
        <end position="2164"/>
    </location>
</feature>
<feature type="zinc finger region" description="PHD-type" evidence="5">
    <location>
        <begin position="1931"/>
        <end position="1981"/>
    </location>
</feature>
<feature type="region of interest" description="Disordered" evidence="7">
    <location>
        <begin position="1"/>
        <end position="29"/>
    </location>
</feature>
<feature type="region of interest" description="Disordered" evidence="7">
    <location>
        <begin position="140"/>
        <end position="348"/>
    </location>
</feature>
<feature type="region of interest" description="Disordered" evidence="7">
    <location>
        <begin position="409"/>
        <end position="428"/>
    </location>
</feature>
<feature type="region of interest" description="Disordered" evidence="7">
    <location>
        <begin position="459"/>
        <end position="479"/>
    </location>
</feature>
<feature type="region of interest" description="Disordered" evidence="7">
    <location>
        <begin position="528"/>
        <end position="698"/>
    </location>
</feature>
<feature type="region of interest" description="Disordered" evidence="7">
    <location>
        <begin position="719"/>
        <end position="740"/>
    </location>
</feature>
<feature type="region of interest" description="Disordered" evidence="7">
    <location>
        <begin position="841"/>
        <end position="872"/>
    </location>
</feature>
<feature type="region of interest" description="Disordered" evidence="7">
    <location>
        <begin position="1021"/>
        <end position="1043"/>
    </location>
</feature>
<feature type="region of interest" description="Disordered" evidence="7">
    <location>
        <begin position="1265"/>
        <end position="1341"/>
    </location>
</feature>
<feature type="region of interest" description="Disordered" evidence="7">
    <location>
        <begin position="1503"/>
        <end position="1542"/>
    </location>
</feature>
<feature type="region of interest" description="Disordered" evidence="7">
    <location>
        <begin position="1582"/>
        <end position="1607"/>
    </location>
</feature>
<feature type="region of interest" description="Disordered" evidence="7">
    <location>
        <begin position="1670"/>
        <end position="1694"/>
    </location>
</feature>
<feature type="region of interest" description="Disordered" evidence="7">
    <location>
        <begin position="1998"/>
        <end position="2040"/>
    </location>
</feature>
<feature type="coiled-coil region" evidence="2">
    <location>
        <begin position="883"/>
        <end position="1061"/>
    </location>
</feature>
<feature type="coiled-coil region" evidence="2">
    <location>
        <begin position="1334"/>
        <end position="1375"/>
    </location>
</feature>
<feature type="compositionally biased region" description="Low complexity" evidence="7">
    <location>
        <begin position="8"/>
        <end position="29"/>
    </location>
</feature>
<feature type="compositionally biased region" description="Polar residues" evidence="7">
    <location>
        <begin position="146"/>
        <end position="163"/>
    </location>
</feature>
<feature type="compositionally biased region" description="Polar residues" evidence="7">
    <location>
        <begin position="171"/>
        <end position="193"/>
    </location>
</feature>
<feature type="compositionally biased region" description="Low complexity" evidence="7">
    <location>
        <begin position="194"/>
        <end position="204"/>
    </location>
</feature>
<feature type="compositionally biased region" description="Low complexity" evidence="7">
    <location>
        <begin position="240"/>
        <end position="263"/>
    </location>
</feature>
<feature type="compositionally biased region" description="Acidic residues" evidence="7">
    <location>
        <begin position="264"/>
        <end position="291"/>
    </location>
</feature>
<feature type="compositionally biased region" description="Basic and acidic residues" evidence="7">
    <location>
        <begin position="307"/>
        <end position="325"/>
    </location>
</feature>
<feature type="compositionally biased region" description="Low complexity" evidence="7">
    <location>
        <begin position="335"/>
        <end position="348"/>
    </location>
</feature>
<feature type="compositionally biased region" description="Polar residues" evidence="7">
    <location>
        <begin position="461"/>
        <end position="479"/>
    </location>
</feature>
<feature type="compositionally biased region" description="Polar residues" evidence="7">
    <location>
        <begin position="528"/>
        <end position="551"/>
    </location>
</feature>
<feature type="compositionally biased region" description="Basic and acidic residues" evidence="7">
    <location>
        <begin position="592"/>
        <end position="605"/>
    </location>
</feature>
<feature type="compositionally biased region" description="Acidic residues" evidence="7">
    <location>
        <begin position="606"/>
        <end position="663"/>
    </location>
</feature>
<feature type="compositionally biased region" description="Polar residues" evidence="7">
    <location>
        <begin position="670"/>
        <end position="693"/>
    </location>
</feature>
<feature type="compositionally biased region" description="Low complexity" evidence="7">
    <location>
        <begin position="720"/>
        <end position="732"/>
    </location>
</feature>
<feature type="compositionally biased region" description="Basic and acidic residues" evidence="7">
    <location>
        <begin position="841"/>
        <end position="861"/>
    </location>
</feature>
<feature type="compositionally biased region" description="Acidic residues" evidence="7">
    <location>
        <begin position="1297"/>
        <end position="1321"/>
    </location>
</feature>
<feature type="compositionally biased region" description="Basic and acidic residues" evidence="7">
    <location>
        <begin position="1322"/>
        <end position="1331"/>
    </location>
</feature>
<feature type="compositionally biased region" description="Polar residues" evidence="7">
    <location>
        <begin position="1503"/>
        <end position="1533"/>
    </location>
</feature>
<feature type="compositionally biased region" description="Pro residues" evidence="7">
    <location>
        <begin position="1588"/>
        <end position="1600"/>
    </location>
</feature>
<feature type="compositionally biased region" description="Polar residues" evidence="7">
    <location>
        <begin position="1670"/>
        <end position="1692"/>
    </location>
</feature>
<feature type="compositionally biased region" description="Basic and acidic residues" evidence="7">
    <location>
        <begin position="2029"/>
        <end position="2040"/>
    </location>
</feature>
<feature type="modified residue" description="N6-acetyllysine" evidence="18">
    <location>
        <position position="1462"/>
    </location>
</feature>
<feature type="modified residue" description="Phosphoserine" evidence="20">
    <location>
        <position position="1465"/>
    </location>
</feature>
<feature type="modified residue" description="Phosphoserine" evidence="20">
    <location>
        <position position="1467"/>
    </location>
</feature>
<feature type="modified residue" description="Phosphoserine" evidence="19">
    <location>
        <position position="1680"/>
    </location>
</feature>
<feature type="modified residue" description="Phosphothreonine" evidence="19">
    <location>
        <position position="2014"/>
    </location>
</feature>
<feature type="modified residue" description="Phosphoserine" evidence="19">
    <location>
        <position position="2019"/>
    </location>
</feature>
<feature type="cross-link" description="Glycyl lysine isopeptide (Lys-Gly) (interchain with G-Cter in SUMO2)" evidence="21">
    <location>
        <position position="1425"/>
    </location>
</feature>
<feature type="splice variant" id="VSP_037114" description="In isoform 4." evidence="13">
    <location>
        <begin position="1"/>
        <end position="196"/>
    </location>
</feature>
<feature type="splice variant" id="VSP_037115" description="In isoform 2 and isoform 5." evidence="14 16">
    <location>
        <begin position="112"/>
        <end position="113"/>
    </location>
</feature>
<feature type="splice variant" id="VSP_000553" description="In isoform 2." evidence="16">
    <location>
        <begin position="633"/>
        <end position="730"/>
    </location>
</feature>
<feature type="splice variant" id="VSP_000554" description="In isoform 3 and isoform 5." evidence="14 15">
    <location>
        <begin position="789"/>
        <end position="822"/>
    </location>
</feature>
<feature type="sequence variant" id="VAR_055549" description="In dbSNP:rs10202670." evidence="9">
    <original>M</original>
    <variation>T</variation>
    <location>
        <position position="71"/>
    </location>
</feature>
<feature type="sequence variant" id="VAR_055550" description="In dbSNP:rs3213790." evidence="8 9">
    <original>L</original>
    <variation>S</variation>
    <location>
        <position position="422"/>
    </location>
</feature>
<feature type="sequence variant" id="VAR_055551" description="In dbSNP:rs3732287.">
    <original>P</original>
    <variation>L</variation>
    <location>
        <position position="530"/>
    </location>
</feature>
<feature type="sequence variant" id="VAR_055552" description="In dbSNP:rs2302924.">
    <original>G</original>
    <variation>V</variation>
    <location>
        <position position="702"/>
    </location>
</feature>
<feature type="sequence variant" id="VAR_055553" description="In dbSNP:rs415793.">
    <original>S</original>
    <variation>N</variation>
    <location>
        <position position="2024"/>
    </location>
</feature>
<feature type="sequence conflict" description="In Ref. 6; AAH12576." evidence="17" ref="6">
    <original>L</original>
    <variation>G</variation>
    <location>
        <position position="95"/>
    </location>
</feature>
<feature type="sequence conflict" description="In Ref. 1; BAA89212." evidence="17" ref="1">
    <original>S</original>
    <variation>F</variation>
    <location>
        <position position="333"/>
    </location>
</feature>
<feature type="sequence conflict" description="In Ref. 1; BAA89212." evidence="17" ref="1">
    <original>G</original>
    <variation>E</variation>
    <location>
        <position position="823"/>
    </location>
</feature>
<feature type="sequence conflict" description="In Ref. 6; AAH12576." evidence="17" ref="6">
    <original>E</original>
    <variation>K</variation>
    <location>
        <position position="918"/>
    </location>
</feature>
<feature type="sequence conflict" description="In Ref. 6; AAH12576." evidence="17" ref="6">
    <original>R</original>
    <variation>Q</variation>
    <location>
        <position position="986"/>
    </location>
</feature>
<feature type="sequence conflict" description="In Ref. 1; BAA89212." evidence="17" ref="1">
    <original>K</original>
    <variation>Q</variation>
    <location>
        <position position="1324"/>
    </location>
</feature>
<feature type="sequence conflict" description="In Ref. 1; BAA89212." evidence="17" ref="1">
    <original>Q</original>
    <variation>P</variation>
    <location>
        <position position="1379"/>
    </location>
</feature>
<feature type="sequence conflict" description="In Ref. 1; BAA89212." evidence="17" ref="1">
    <original>Q</original>
    <variation>R</variation>
    <location>
        <position position="1391"/>
    </location>
</feature>
<feature type="sequence conflict" description="In Ref. 1; BAA89212." evidence="17" ref="1">
    <original>S</original>
    <variation>L</variation>
    <location>
        <position position="1649"/>
    </location>
</feature>
<feature type="sequence conflict" description="In Ref. 1; BAA89212." evidence="17" ref="1">
    <original>K</original>
    <variation>Q</variation>
    <location>
        <position position="2034"/>
    </location>
</feature>
<feature type="turn" evidence="26">
    <location>
        <begin position="744"/>
        <end position="746"/>
    </location>
</feature>
<feature type="helix" evidence="26">
    <location>
        <begin position="747"/>
        <end position="750"/>
    </location>
</feature>
<feature type="strand" evidence="26">
    <location>
        <begin position="754"/>
        <end position="762"/>
    </location>
</feature>
<feature type="strand" evidence="26">
    <location>
        <begin position="765"/>
        <end position="773"/>
    </location>
</feature>
<feature type="helix" evidence="26">
    <location>
        <begin position="783"/>
        <end position="792"/>
    </location>
</feature>
<feature type="helix" evidence="26">
    <location>
        <begin position="800"/>
        <end position="802"/>
    </location>
</feature>
<feature type="strand" evidence="26">
    <location>
        <begin position="812"/>
        <end position="818"/>
    </location>
</feature>
<feature type="strand" evidence="26">
    <location>
        <begin position="823"/>
        <end position="828"/>
    </location>
</feature>
<feature type="helix" evidence="26">
    <location>
        <begin position="831"/>
        <end position="833"/>
    </location>
</feature>
<feature type="helix" evidence="26">
    <location>
        <begin position="834"/>
        <end position="842"/>
    </location>
</feature>
<feature type="turn" evidence="23">
    <location>
        <begin position="1935"/>
        <end position="1937"/>
    </location>
</feature>
<feature type="helix" evidence="23">
    <location>
        <begin position="1943"/>
        <end position="1945"/>
    </location>
</feature>
<feature type="strand" evidence="23">
    <location>
        <begin position="1946"/>
        <end position="1949"/>
    </location>
</feature>
<feature type="turn" evidence="23">
    <location>
        <begin position="1950"/>
        <end position="1952"/>
    </location>
</feature>
<feature type="strand" evidence="23">
    <location>
        <begin position="1955"/>
        <end position="1957"/>
    </location>
</feature>
<feature type="turn" evidence="23">
    <location>
        <begin position="1958"/>
        <end position="1960"/>
    </location>
</feature>
<feature type="strand" evidence="23">
    <location>
        <begin position="1961"/>
        <end position="1963"/>
    </location>
</feature>
<feature type="helix" evidence="23">
    <location>
        <begin position="1976"/>
        <end position="1982"/>
    </location>
</feature>
<feature type="helix" evidence="25">
    <location>
        <begin position="2065"/>
        <end position="2078"/>
    </location>
</feature>
<feature type="helix" evidence="24">
    <location>
        <begin position="2080"/>
        <end position="2082"/>
    </location>
</feature>
<feature type="helix" evidence="25">
    <location>
        <begin position="2083"/>
        <end position="2085"/>
    </location>
</feature>
<feature type="turn" evidence="25">
    <location>
        <begin position="2091"/>
        <end position="2093"/>
    </location>
</feature>
<feature type="strand" evidence="22">
    <location>
        <begin position="2094"/>
        <end position="2096"/>
    </location>
</feature>
<feature type="helix" evidence="25">
    <location>
        <begin position="2097"/>
        <end position="2100"/>
    </location>
</feature>
<feature type="helix" evidence="25">
    <location>
        <begin position="2107"/>
        <end position="2115"/>
    </location>
</feature>
<feature type="helix" evidence="25">
    <location>
        <begin position="2122"/>
        <end position="2139"/>
    </location>
</feature>
<feature type="strand" evidence="25">
    <location>
        <begin position="2142"/>
        <end position="2144"/>
    </location>
</feature>
<feature type="helix" evidence="25">
    <location>
        <begin position="2145"/>
        <end position="2165"/>
    </location>
</feature>
<evidence type="ECO:0000250" key="1">
    <source>
        <dbReference type="UniProtKB" id="A2AUY4"/>
    </source>
</evidence>
<evidence type="ECO:0000255" key="2"/>
<evidence type="ECO:0000255" key="3">
    <source>
        <dbReference type="PROSITE-ProRule" id="PRU00035"/>
    </source>
</evidence>
<evidence type="ECO:0000255" key="4">
    <source>
        <dbReference type="PROSITE-ProRule" id="PRU00063"/>
    </source>
</evidence>
<evidence type="ECO:0000255" key="5">
    <source>
        <dbReference type="PROSITE-ProRule" id="PRU00146"/>
    </source>
</evidence>
<evidence type="ECO:0000255" key="6">
    <source>
        <dbReference type="PROSITE-ProRule" id="PRU00338"/>
    </source>
</evidence>
<evidence type="ECO:0000256" key="7">
    <source>
        <dbReference type="SAM" id="MobiDB-lite"/>
    </source>
</evidence>
<evidence type="ECO:0000269" key="8">
    <source>
    </source>
</evidence>
<evidence type="ECO:0000269" key="9">
    <source>
    </source>
</evidence>
<evidence type="ECO:0000269" key="10">
    <source>
    </source>
</evidence>
<evidence type="ECO:0000269" key="11">
    <source>
    </source>
</evidence>
<evidence type="ECO:0000269" key="12">
    <source>
    </source>
</evidence>
<evidence type="ECO:0000303" key="13">
    <source>
    </source>
</evidence>
<evidence type="ECO:0000303" key="14">
    <source>
    </source>
</evidence>
<evidence type="ECO:0000303" key="15">
    <source>
    </source>
</evidence>
<evidence type="ECO:0000303" key="16">
    <source>
    </source>
</evidence>
<evidence type="ECO:0000305" key="17"/>
<evidence type="ECO:0007744" key="18">
    <source>
    </source>
</evidence>
<evidence type="ECO:0007744" key="19">
    <source>
    </source>
</evidence>
<evidence type="ECO:0007744" key="20">
    <source>
    </source>
</evidence>
<evidence type="ECO:0007744" key="21">
    <source>
    </source>
</evidence>
<evidence type="ECO:0007829" key="22">
    <source>
        <dbReference type="PDB" id="2E7O"/>
    </source>
</evidence>
<evidence type="ECO:0007829" key="23">
    <source>
        <dbReference type="PDB" id="4QF3"/>
    </source>
</evidence>
<evidence type="ECO:0007829" key="24">
    <source>
        <dbReference type="PDB" id="5PE8"/>
    </source>
</evidence>
<evidence type="ECO:0007829" key="25">
    <source>
        <dbReference type="PDB" id="5PG1"/>
    </source>
</evidence>
<evidence type="ECO:0007829" key="26">
    <source>
        <dbReference type="PDB" id="7WIN"/>
    </source>
</evidence>
<comment type="function">
    <text evidence="1 12 13">Regulatory subunit of the ATP-dependent BRF-1 and BRF-5 ISWI chromatin remodeling complexes, which form ordered nucleosome arrays on chromatin and facilitate access to DNA during DNA-templated processes such as DNA replication, transcription, and repair (PubMed:28801535). Both complexes regulate the spacing of nucleosomes along the chromatin and have the ability to slide mononucleosomes to the center of a DNA template (PubMed:28801535). The BRF-1 ISWI chromatin remodeling complex has a lower ATP hydrolysis rate than the BRF-5 ISWI chromatin remodeling complex (PubMed:28801535). Chromatin reader protein, which may play a role in transcriptional regulation via interaction with ISWI (By similarity) (PubMed:10662543). Involved in positively modulating the rate of age-related behavioral deterioration (By similarity). Represses the expression of mitochondrial function-related genes, perhaps by occupying their promoter regions, working in concert with histone methyltransferase EHMT1 (By similarity).</text>
</comment>
<comment type="subunit">
    <text evidence="1 10 12">Component of the BRF-1 ISWI chromatin remodeling complex, at least composed of SMARCA1 and BAZ2B, which regulates the spacing of histone octamers on the DNA template to facilitate access to DNA (PubMed:28801535). Within the BRF-1 ISWI chromatin remodeling complex interacts with SMARCA1; the interaction is direct (PubMed:28801535). Component of the BRF-5 ISWI chromatin remodeling complex, at least composed of SMARCA5/SNF2H and BAZ2B, which regulates the spacing of histone octamers on the DNA template to facilitate access to DNA (PubMed:28801535). Within the BRF-5 ISWI chromatin remodeling complex interacts with SMARCA5/SNF2H; the interaction is direct (PubMed:28801535). Interacts with acetylated lysine residues on histone H1.4, H2A, H2B, H3 and H4 (in vitro). Interacts with EHMT1 (By similarity).</text>
</comment>
<comment type="interaction">
    <interactant intactId="EBI-741542">
        <id>Q9UIF8</id>
    </interactant>
    <interactant intactId="EBI-359248">
        <id>Q96GX9</id>
        <label>APIP</label>
    </interactant>
    <organismsDiffer>false</organismsDiffer>
    <experiments>3</experiments>
</comment>
<comment type="interaction">
    <interactant intactId="EBI-741542">
        <id>Q9UIF8</id>
    </interactant>
    <interactant intactId="EBI-12191873">
        <id>Q86UB2</id>
        <label>BIVM</label>
    </interactant>
    <organismsDiffer>false</organismsDiffer>
    <experiments>3</experiments>
</comment>
<comment type="interaction">
    <interactant intactId="EBI-741542">
        <id>Q9UIF8</id>
    </interactant>
    <interactant intactId="EBI-739624">
        <id>Q8NHQ1</id>
        <label>CEP70</label>
    </interactant>
    <organismsDiffer>false</organismsDiffer>
    <experiments>3</experiments>
</comment>
<comment type="interaction">
    <interactant intactId="EBI-741542">
        <id>Q9UIF8</id>
    </interactant>
    <interactant intactId="EBI-10171902">
        <id>P56545-3</id>
        <label>CTBP2</label>
    </interactant>
    <organismsDiffer>false</organismsDiffer>
    <experiments>5</experiments>
</comment>
<comment type="interaction">
    <interactant intactId="EBI-741542">
        <id>Q9UIF8</id>
    </interactant>
    <interactant intactId="EBI-740459">
        <id>P51116</id>
        <label>FXR2</label>
    </interactant>
    <organismsDiffer>false</organismsDiffer>
    <experiments>3</experiments>
</comment>
<comment type="interaction">
    <interactant intactId="EBI-741542">
        <id>Q9UIF8</id>
    </interactant>
    <interactant intactId="EBI-618309">
        <id>Q08379</id>
        <label>GOLGA2</label>
    </interactant>
    <organismsDiffer>false</organismsDiffer>
    <experiments>3</experiments>
</comment>
<comment type="interaction">
    <interactant intactId="EBI-741542">
        <id>Q9UIF8</id>
    </interactant>
    <interactant intactId="EBI-2549423">
        <id>Q6NT76</id>
        <label>HMBOX1</label>
    </interactant>
    <organismsDiffer>false</organismsDiffer>
    <experiments>3</experiments>
</comment>
<comment type="interaction">
    <interactant intactId="EBI-741542">
        <id>Q9UIF8</id>
    </interactant>
    <interactant intactId="EBI-7116203">
        <id>O75031</id>
        <label>HSF2BP</label>
    </interactant>
    <organismsDiffer>false</organismsDiffer>
    <experiments>3</experiments>
</comment>
<comment type="interaction">
    <interactant intactId="EBI-741542">
        <id>Q9UIF8</id>
    </interactant>
    <interactant intactId="EBI-12013954">
        <id>Q0VAM2-3</id>
        <label>RASGEF1B</label>
    </interactant>
    <organismsDiffer>false</organismsDiffer>
    <experiments>3</experiments>
</comment>
<comment type="interaction">
    <interactant intactId="EBI-741542">
        <id>Q9UIF8</id>
    </interactant>
    <interactant intactId="EBI-11525407">
        <id>Q15019-3</id>
        <label>SEPTIN2</label>
    </interactant>
    <organismsDiffer>false</organismsDiffer>
    <experiments>3</experiments>
</comment>
<comment type="interaction">
    <interactant intactId="EBI-741542">
        <id>Q9UIF8</id>
    </interactant>
    <interactant intactId="EBI-1105213">
        <id>Q9UBB9</id>
        <label>TFIP11</label>
    </interactant>
    <organismsDiffer>false</organismsDiffer>
    <experiments>3</experiments>
</comment>
<comment type="interaction">
    <interactant intactId="EBI-741542">
        <id>Q9UIF8</id>
    </interactant>
    <interactant intactId="EBI-355744">
        <id>Q12933</id>
        <label>TRAF2</label>
    </interactant>
    <organismsDiffer>false</organismsDiffer>
    <experiments>3</experiments>
</comment>
<comment type="interaction">
    <interactant intactId="EBI-10321972">
        <id>Q9UIF8-2</id>
    </interactant>
    <interactant intactId="EBI-10171902">
        <id>P56545-3</id>
        <label>CTBP2</label>
    </interactant>
    <organismsDiffer>false</organismsDiffer>
    <experiments>3</experiments>
</comment>
<comment type="interaction">
    <interactant intactId="EBI-10321972">
        <id>Q9UIF8-2</id>
    </interactant>
    <interactant intactId="EBI-740459">
        <id>P51116</id>
        <label>FXR2</label>
    </interactant>
    <organismsDiffer>false</organismsDiffer>
    <experiments>3</experiments>
</comment>
<comment type="interaction">
    <interactant intactId="EBI-10321972">
        <id>Q9UIF8-2</id>
    </interactant>
    <interactant intactId="EBI-745680">
        <id>Q96MF2</id>
        <label>STAC3</label>
    </interactant>
    <organismsDiffer>false</organismsDiffer>
    <experiments>3</experiments>
</comment>
<comment type="interaction">
    <interactant intactId="EBI-10321972">
        <id>Q9UIF8-2</id>
    </interactant>
    <interactant intactId="EBI-10176632">
        <id>O43829</id>
        <label>ZBTB14</label>
    </interactant>
    <organismsDiffer>false</organismsDiffer>
    <experiments>3</experiments>
</comment>
<comment type="interaction">
    <interactant intactId="EBI-10321972">
        <id>Q9UIF8-2</id>
    </interactant>
    <interactant intactId="EBI-742740">
        <id>Q96BR9</id>
        <label>ZBTB8A</label>
    </interactant>
    <organismsDiffer>false</organismsDiffer>
    <experiments>3</experiments>
</comment>
<comment type="subcellular location">
    <subcellularLocation>
        <location evidence="4 11">Nucleus</location>
    </subcellularLocation>
</comment>
<comment type="alternative products">
    <event type="alternative splicing"/>
    <isoform>
        <id>Q9UIF8-1</id>
        <name>1</name>
        <sequence type="displayed"/>
    </isoform>
    <isoform>
        <id>Q9UIF8-2</id>
        <name>2</name>
        <sequence type="described" ref="VSP_037115 VSP_000553"/>
    </isoform>
    <isoform>
        <id>Q9UIF8-3</id>
        <name>3</name>
        <sequence type="described" ref="VSP_000554"/>
    </isoform>
    <isoform>
        <id>Q9UIF8-4</id>
        <name>4</name>
        <sequence type="described" ref="VSP_037114"/>
    </isoform>
    <isoform>
        <id>Q9UIF8-5</id>
        <name>5</name>
        <sequence type="described" ref="VSP_037115 VSP_000554"/>
    </isoform>
    <text>Experimental confirmation may be lacking for some isoforms.</text>
</comment>
<comment type="tissue specificity">
    <text>Expressed at varying levels in several tissues, whereas a smaller transcript was expressed specifically in testis.</text>
</comment>
<comment type="similarity">
    <text evidence="17">Belongs to the WAL family.</text>
</comment>
<comment type="sequence caution" evidence="17">
    <conflict type="frameshift">
        <sequence resource="EMBL-CDS" id="AAH12576"/>
    </conflict>
</comment>
<comment type="sequence caution" evidence="17">
    <conflict type="miscellaneous discrepancy">
        <sequence resource="EMBL-CDS" id="AAH12576"/>
    </conflict>
    <text>contaminating sequence. Potential poly-A sequence.</text>
</comment>
<comment type="sequence caution" evidence="17">
    <conflict type="erroneous initiation">
        <sequence resource="EMBL-CDS" id="BAA96000"/>
    </conflict>
</comment>
<comment type="sequence caution" evidence="17">
    <conflict type="erroneous initiation">
        <sequence resource="EMBL-CDS" id="BAB55231"/>
    </conflict>
</comment>
<dbReference type="EMBL" id="AB032255">
    <property type="protein sequence ID" value="BAA89212.1"/>
    <property type="molecule type" value="mRNA"/>
</dbReference>
<dbReference type="EMBL" id="AB040909">
    <property type="protein sequence ID" value="BAA96000.2"/>
    <property type="status" value="ALT_INIT"/>
    <property type="molecule type" value="mRNA"/>
</dbReference>
<dbReference type="EMBL" id="AL080173">
    <property type="protein sequence ID" value="CAB45759.1"/>
    <property type="molecule type" value="mRNA"/>
</dbReference>
<dbReference type="EMBL" id="AL834381">
    <property type="protein sequence ID" value="CAD39044.2"/>
    <property type="molecule type" value="mRNA"/>
</dbReference>
<dbReference type="EMBL" id="CH471058">
    <property type="protein sequence ID" value="EAX11404.1"/>
    <property type="molecule type" value="Genomic_DNA"/>
</dbReference>
<dbReference type="EMBL" id="CH471058">
    <property type="protein sequence ID" value="EAX11405.1"/>
    <property type="molecule type" value="Genomic_DNA"/>
</dbReference>
<dbReference type="EMBL" id="CH471058">
    <property type="protein sequence ID" value="EAX11407.1"/>
    <property type="molecule type" value="Genomic_DNA"/>
</dbReference>
<dbReference type="EMBL" id="BC012576">
    <property type="protein sequence ID" value="AAH12576.1"/>
    <property type="status" value="ALT_SEQ"/>
    <property type="molecule type" value="mRNA"/>
</dbReference>
<dbReference type="EMBL" id="AK027612">
    <property type="protein sequence ID" value="BAB55231.1"/>
    <property type="status" value="ALT_INIT"/>
    <property type="molecule type" value="mRNA"/>
</dbReference>
<dbReference type="CCDS" id="CCDS2209.2">
    <molecule id="Q9UIF8-1"/>
</dbReference>
<dbReference type="CCDS" id="CCDS74594.1">
    <molecule id="Q9UIF8-5"/>
</dbReference>
<dbReference type="PIR" id="T12495">
    <property type="entry name" value="T12495"/>
</dbReference>
<dbReference type="RefSeq" id="NP_001276904.1">
    <molecule id="Q9UIF8-5"/>
    <property type="nucleotide sequence ID" value="NM_001289975.1"/>
</dbReference>
<dbReference type="RefSeq" id="NP_038478.2">
    <molecule id="Q9UIF8-1"/>
    <property type="nucleotide sequence ID" value="NM_013450.4"/>
</dbReference>
<dbReference type="PDB" id="2E7O">
    <property type="method" value="NMR"/>
    <property type="chains" value="A=2062-2166"/>
</dbReference>
<dbReference type="PDB" id="3G0L">
    <property type="method" value="X-ray"/>
    <property type="resolution" value="2.03 A"/>
    <property type="chains" value="A=2054-2168"/>
</dbReference>
<dbReference type="PDB" id="3Q2F">
    <property type="method" value="X-ray"/>
    <property type="resolution" value="2.06 A"/>
    <property type="chains" value="A=2054-2168"/>
</dbReference>
<dbReference type="PDB" id="4CUP">
    <property type="method" value="X-ray"/>
    <property type="resolution" value="1.88 A"/>
    <property type="chains" value="A=2054-2168"/>
</dbReference>
<dbReference type="PDB" id="4CUQ">
    <property type="method" value="X-ray"/>
    <property type="resolution" value="2.11 A"/>
    <property type="chains" value="A=2054-2168"/>
</dbReference>
<dbReference type="PDB" id="4CUR">
    <property type="method" value="X-ray"/>
    <property type="resolution" value="1.84 A"/>
    <property type="chains" value="A=2054-2168"/>
</dbReference>
<dbReference type="PDB" id="4CUS">
    <property type="method" value="X-ray"/>
    <property type="resolution" value="1.78 A"/>
    <property type="chains" value="A=2054-2168"/>
</dbReference>
<dbReference type="PDB" id="4CUT">
    <property type="method" value="X-ray"/>
    <property type="resolution" value="1.84 A"/>
    <property type="chains" value="A=2054-2168"/>
</dbReference>
<dbReference type="PDB" id="4CUU">
    <property type="method" value="X-ray"/>
    <property type="resolution" value="1.80 A"/>
    <property type="chains" value="A=2054-2168"/>
</dbReference>
<dbReference type="PDB" id="4IR3">
    <property type="method" value="X-ray"/>
    <property type="resolution" value="2.00 A"/>
    <property type="chains" value="A=2054-2168"/>
</dbReference>
<dbReference type="PDB" id="4IR4">
    <property type="method" value="X-ray"/>
    <property type="resolution" value="2.05 A"/>
    <property type="chains" value="A=2054-2168"/>
</dbReference>
<dbReference type="PDB" id="4IR5">
    <property type="method" value="X-ray"/>
    <property type="resolution" value="1.70 A"/>
    <property type="chains" value="A=2054-2168"/>
</dbReference>
<dbReference type="PDB" id="4IR6">
    <property type="method" value="X-ray"/>
    <property type="resolution" value="1.80 A"/>
    <property type="chains" value="A=2054-2168"/>
</dbReference>
<dbReference type="PDB" id="4NR9">
    <property type="method" value="X-ray"/>
    <property type="resolution" value="1.98 A"/>
    <property type="chains" value="A=2054-2168"/>
</dbReference>
<dbReference type="PDB" id="4NRA">
    <property type="method" value="X-ray"/>
    <property type="resolution" value="1.85 A"/>
    <property type="chains" value="A=2054-2168"/>
</dbReference>
<dbReference type="PDB" id="4NRB">
    <property type="method" value="X-ray"/>
    <property type="resolution" value="2.08 A"/>
    <property type="chains" value="A=2054-2168"/>
</dbReference>
<dbReference type="PDB" id="4NRC">
    <property type="method" value="X-ray"/>
    <property type="resolution" value="1.86 A"/>
    <property type="chains" value="A=2054-2168"/>
</dbReference>
<dbReference type="PDB" id="4QC1">
    <property type="method" value="X-ray"/>
    <property type="resolution" value="1.99 A"/>
    <property type="chains" value="A/B=2062-2166"/>
</dbReference>
<dbReference type="PDB" id="4QC3">
    <property type="method" value="X-ray"/>
    <property type="resolution" value="1.60 A"/>
    <property type="chains" value="A/B=2062-2166"/>
</dbReference>
<dbReference type="PDB" id="4QF3">
    <property type="method" value="X-ray"/>
    <property type="resolution" value="1.60 A"/>
    <property type="chains" value="A/B=1928-1983"/>
</dbReference>
<dbReference type="PDB" id="4RVR">
    <property type="method" value="X-ray"/>
    <property type="resolution" value="1.98 A"/>
    <property type="chains" value="A=2054-2168"/>
</dbReference>
<dbReference type="PDB" id="4XUA">
    <property type="method" value="X-ray"/>
    <property type="resolution" value="1.75 A"/>
    <property type="chains" value="A=2054-2168"/>
</dbReference>
<dbReference type="PDB" id="4XUB">
    <property type="method" value="X-ray"/>
    <property type="resolution" value="1.98 A"/>
    <property type="chains" value="A=2054-2168"/>
</dbReference>
<dbReference type="PDB" id="5CQ3">
    <property type="method" value="X-ray"/>
    <property type="resolution" value="1.93 A"/>
    <property type="chains" value="A=2054-2168"/>
</dbReference>
<dbReference type="PDB" id="5CQ4">
    <property type="method" value="X-ray"/>
    <property type="resolution" value="1.78 A"/>
    <property type="chains" value="A=2054-2168"/>
</dbReference>
<dbReference type="PDB" id="5CQ5">
    <property type="method" value="X-ray"/>
    <property type="resolution" value="1.96 A"/>
    <property type="chains" value="A=2054-2168"/>
</dbReference>
<dbReference type="PDB" id="5CQ6">
    <property type="method" value="X-ray"/>
    <property type="resolution" value="1.97 A"/>
    <property type="chains" value="A=2054-2168"/>
</dbReference>
<dbReference type="PDB" id="5CQ7">
    <property type="method" value="X-ray"/>
    <property type="resolution" value="1.86 A"/>
    <property type="chains" value="A=2054-2166"/>
</dbReference>
<dbReference type="PDB" id="5CQ8">
    <property type="method" value="X-ray"/>
    <property type="resolution" value="1.65 A"/>
    <property type="chains" value="A=2054-2168"/>
</dbReference>
<dbReference type="PDB" id="5CQA">
    <property type="method" value="X-ray"/>
    <property type="resolution" value="2.13 A"/>
    <property type="chains" value="A=2054-2166"/>
</dbReference>
<dbReference type="PDB" id="5CU8">
    <property type="method" value="X-ray"/>
    <property type="resolution" value="2.05 A"/>
    <property type="chains" value="A=2054-2166"/>
</dbReference>
<dbReference type="PDB" id="5CUA">
    <property type="method" value="X-ray"/>
    <property type="resolution" value="1.89 A"/>
    <property type="chains" value="A=2054-2168"/>
</dbReference>
<dbReference type="PDB" id="5CUB">
    <property type="method" value="X-ray"/>
    <property type="resolution" value="2.10 A"/>
    <property type="chains" value="A=2054-2166"/>
</dbReference>
<dbReference type="PDB" id="5CUC">
    <property type="method" value="X-ray"/>
    <property type="resolution" value="1.85 A"/>
    <property type="chains" value="A=2054-2166"/>
</dbReference>
<dbReference type="PDB" id="5CUD">
    <property type="method" value="X-ray"/>
    <property type="resolution" value="1.75 A"/>
    <property type="chains" value="A=2054-2168"/>
</dbReference>
<dbReference type="PDB" id="5CUE">
    <property type="method" value="X-ray"/>
    <property type="resolution" value="2.08 A"/>
    <property type="chains" value="A=2054-2166"/>
</dbReference>
<dbReference type="PDB" id="5CUG">
    <property type="method" value="X-ray"/>
    <property type="resolution" value="1.78 A"/>
    <property type="chains" value="A=2054-2168"/>
</dbReference>
<dbReference type="PDB" id="5DYU">
    <property type="method" value="X-ray"/>
    <property type="resolution" value="1.65 A"/>
    <property type="chains" value="A=2054-2167"/>
</dbReference>
<dbReference type="PDB" id="5DYX">
    <property type="method" value="X-ray"/>
    <property type="resolution" value="1.85 A"/>
    <property type="chains" value="A=2054-2167"/>
</dbReference>
<dbReference type="PDB" id="5E73">
    <property type="method" value="X-ray"/>
    <property type="resolution" value="1.71 A"/>
    <property type="chains" value="A=2054-2167"/>
</dbReference>
<dbReference type="PDB" id="5E74">
    <property type="method" value="X-ray"/>
    <property type="resolution" value="1.78 A"/>
    <property type="chains" value="A=2054-2167"/>
</dbReference>
<dbReference type="PDB" id="5E9I">
    <property type="method" value="X-ray"/>
    <property type="resolution" value="1.96 A"/>
    <property type="chains" value="A=2054-2167"/>
</dbReference>
<dbReference type="PDB" id="5E9K">
    <property type="method" value="X-ray"/>
    <property type="resolution" value="2.07 A"/>
    <property type="chains" value="A=2054-2167"/>
</dbReference>
<dbReference type="PDB" id="5E9L">
    <property type="method" value="X-ray"/>
    <property type="resolution" value="1.90 A"/>
    <property type="chains" value="A=2054-2167"/>
</dbReference>
<dbReference type="PDB" id="5E9M">
    <property type="method" value="X-ray"/>
    <property type="resolution" value="1.78 A"/>
    <property type="chains" value="A=2054-2167"/>
</dbReference>
<dbReference type="PDB" id="5E9Y">
    <property type="method" value="X-ray"/>
    <property type="resolution" value="1.65 A"/>
    <property type="chains" value="A=2054-2167"/>
</dbReference>
<dbReference type="PDB" id="5L8T">
    <property type="method" value="X-ray"/>
    <property type="resolution" value="1.85 A"/>
    <property type="chains" value="A=2054-2167"/>
</dbReference>
<dbReference type="PDB" id="5L8U">
    <property type="method" value="X-ray"/>
    <property type="resolution" value="1.85 A"/>
    <property type="chains" value="A=2054-2167"/>
</dbReference>
<dbReference type="PDB" id="5L96">
    <property type="method" value="X-ray"/>
    <property type="resolution" value="2.15 A"/>
    <property type="chains" value="A=2054-2167"/>
</dbReference>
<dbReference type="PDB" id="5L97">
    <property type="method" value="X-ray"/>
    <property type="resolution" value="2.05 A"/>
    <property type="chains" value="A=2054-2167"/>
</dbReference>
<dbReference type="PDB" id="5L98">
    <property type="method" value="X-ray"/>
    <property type="resolution" value="2.26 A"/>
    <property type="chains" value="A=2054-2167"/>
</dbReference>
<dbReference type="PDB" id="5L99">
    <property type="method" value="X-ray"/>
    <property type="resolution" value="2.00 A"/>
    <property type="chains" value="A=2054-2167"/>
</dbReference>
<dbReference type="PDB" id="5MGE">
    <property type="method" value="X-ray"/>
    <property type="resolution" value="1.95 A"/>
    <property type="chains" value="A=2054-2167"/>
</dbReference>
<dbReference type="PDB" id="5MGF">
    <property type="method" value="X-ray"/>
    <property type="resolution" value="1.90 A"/>
    <property type="chains" value="A=2054-2167"/>
</dbReference>
<dbReference type="PDB" id="5MGG">
    <property type="method" value="X-ray"/>
    <property type="resolution" value="2.10 A"/>
    <property type="chains" value="A=2054-2167"/>
</dbReference>
<dbReference type="PDB" id="5OR9">
    <property type="method" value="X-ray"/>
    <property type="resolution" value="2.00 A"/>
    <property type="chains" value="A=2054-2168"/>
</dbReference>
<dbReference type="PDB" id="5ORB">
    <property type="method" value="X-ray"/>
    <property type="resolution" value="2.10 A"/>
    <property type="chains" value="A=2054-2168"/>
</dbReference>
<dbReference type="PDB" id="5PB7">
    <property type="method" value="X-ray"/>
    <property type="resolution" value="1.66 A"/>
    <property type="chains" value="A=2054-2168"/>
</dbReference>
<dbReference type="PDB" id="5PB8">
    <property type="method" value="X-ray"/>
    <property type="resolution" value="1.65 A"/>
    <property type="chains" value="A=2054-2168"/>
</dbReference>
<dbReference type="PDB" id="5PB9">
    <property type="method" value="X-ray"/>
    <property type="resolution" value="1.78 A"/>
    <property type="chains" value="A=2054-2168"/>
</dbReference>
<dbReference type="PDB" id="5PBA">
    <property type="method" value="X-ray"/>
    <property type="resolution" value="1.93 A"/>
    <property type="chains" value="A=2054-2168"/>
</dbReference>
<dbReference type="PDB" id="5PBB">
    <property type="method" value="X-ray"/>
    <property type="resolution" value="1.78 A"/>
    <property type="chains" value="A=2054-2168"/>
</dbReference>
<dbReference type="PDB" id="5PBC">
    <property type="method" value="X-ray"/>
    <property type="resolution" value="1.77 A"/>
    <property type="chains" value="A=2054-2168"/>
</dbReference>
<dbReference type="PDB" id="5PBD">
    <property type="method" value="X-ray"/>
    <property type="resolution" value="1.78 A"/>
    <property type="chains" value="A=2054-2168"/>
</dbReference>
<dbReference type="PDB" id="5PBE">
    <property type="method" value="X-ray"/>
    <property type="resolution" value="1.83 A"/>
    <property type="chains" value="A=2054-2168"/>
</dbReference>
<dbReference type="PDB" id="5PBF">
    <property type="method" value="X-ray"/>
    <property type="resolution" value="1.80 A"/>
    <property type="chains" value="A=2054-2168"/>
</dbReference>
<dbReference type="PDB" id="5PBG">
    <property type="method" value="X-ray"/>
    <property type="resolution" value="1.72 A"/>
    <property type="chains" value="A=2054-2168"/>
</dbReference>
<dbReference type="PDB" id="5PBH">
    <property type="method" value="X-ray"/>
    <property type="resolution" value="1.69 A"/>
    <property type="chains" value="A=2054-2168"/>
</dbReference>
<dbReference type="PDB" id="5PBI">
    <property type="method" value="X-ray"/>
    <property type="resolution" value="1.78 A"/>
    <property type="chains" value="A=2054-2168"/>
</dbReference>
<dbReference type="PDB" id="5PBJ">
    <property type="method" value="X-ray"/>
    <property type="resolution" value="1.79 A"/>
    <property type="chains" value="A=2054-2168"/>
</dbReference>
<dbReference type="PDB" id="5PBK">
    <property type="method" value="X-ray"/>
    <property type="resolution" value="1.77 A"/>
    <property type="chains" value="A=2054-2168"/>
</dbReference>
<dbReference type="PDB" id="5PBL">
    <property type="method" value="X-ray"/>
    <property type="resolution" value="1.84 A"/>
    <property type="chains" value="A=2054-2168"/>
</dbReference>
<dbReference type="PDB" id="5PBM">
    <property type="method" value="X-ray"/>
    <property type="resolution" value="1.67 A"/>
    <property type="chains" value="A=2054-2168"/>
</dbReference>
<dbReference type="PDB" id="5PBN">
    <property type="method" value="X-ray"/>
    <property type="resolution" value="1.86 A"/>
    <property type="chains" value="A=2054-2168"/>
</dbReference>
<dbReference type="PDB" id="5PBO">
    <property type="method" value="X-ray"/>
    <property type="resolution" value="1.95 A"/>
    <property type="chains" value="A=2054-2168"/>
</dbReference>
<dbReference type="PDB" id="5PBP">
    <property type="method" value="X-ray"/>
    <property type="resolution" value="1.88 A"/>
    <property type="chains" value="A=2054-2168"/>
</dbReference>
<dbReference type="PDB" id="5PBQ">
    <property type="method" value="X-ray"/>
    <property type="resolution" value="1.93 A"/>
    <property type="chains" value="A=2054-2168"/>
</dbReference>
<dbReference type="PDB" id="5PBR">
    <property type="method" value="X-ray"/>
    <property type="resolution" value="1.81 A"/>
    <property type="chains" value="A=2054-2168"/>
</dbReference>
<dbReference type="PDB" id="5PBS">
    <property type="method" value="X-ray"/>
    <property type="resolution" value="1.77 A"/>
    <property type="chains" value="A=2054-2168"/>
</dbReference>
<dbReference type="PDB" id="5PBT">
    <property type="method" value="X-ray"/>
    <property type="resolution" value="1.79 A"/>
    <property type="chains" value="A=2054-2168"/>
</dbReference>
<dbReference type="PDB" id="5PBU">
    <property type="method" value="X-ray"/>
    <property type="resolution" value="1.88 A"/>
    <property type="chains" value="A=2054-2168"/>
</dbReference>
<dbReference type="PDB" id="5PBV">
    <property type="method" value="X-ray"/>
    <property type="resolution" value="1.74 A"/>
    <property type="chains" value="A=2054-2168"/>
</dbReference>
<dbReference type="PDB" id="5PBW">
    <property type="method" value="X-ray"/>
    <property type="resolution" value="1.84 A"/>
    <property type="chains" value="A=2054-2168"/>
</dbReference>
<dbReference type="PDB" id="5PBX">
    <property type="method" value="X-ray"/>
    <property type="resolution" value="1.65 A"/>
    <property type="chains" value="A=2054-2168"/>
</dbReference>
<dbReference type="PDB" id="5PBY">
    <property type="method" value="X-ray"/>
    <property type="resolution" value="1.75 A"/>
    <property type="chains" value="A=2054-2168"/>
</dbReference>
<dbReference type="PDB" id="5PBZ">
    <property type="method" value="X-ray"/>
    <property type="resolution" value="1.70 A"/>
    <property type="chains" value="A=2054-2168"/>
</dbReference>
<dbReference type="PDB" id="5PC0">
    <property type="method" value="X-ray"/>
    <property type="resolution" value="1.79 A"/>
    <property type="chains" value="A=2054-2168"/>
</dbReference>
<dbReference type="PDB" id="5PC1">
    <property type="method" value="X-ray"/>
    <property type="resolution" value="1.72 A"/>
    <property type="chains" value="A=2054-2168"/>
</dbReference>
<dbReference type="PDB" id="5PC2">
    <property type="method" value="X-ray"/>
    <property type="resolution" value="1.79 A"/>
    <property type="chains" value="A=2054-2168"/>
</dbReference>
<dbReference type="PDB" id="5PC3">
    <property type="method" value="X-ray"/>
    <property type="resolution" value="1.80 A"/>
    <property type="chains" value="A=2054-2168"/>
</dbReference>
<dbReference type="PDB" id="5PC4">
    <property type="method" value="X-ray"/>
    <property type="resolution" value="1.86 A"/>
    <property type="chains" value="A=2054-2168"/>
</dbReference>
<dbReference type="PDB" id="5PC5">
    <property type="method" value="X-ray"/>
    <property type="resolution" value="1.85 A"/>
    <property type="chains" value="A=2054-2168"/>
</dbReference>
<dbReference type="PDB" id="5PC6">
    <property type="method" value="X-ray"/>
    <property type="resolution" value="1.74 A"/>
    <property type="chains" value="A=2054-2168"/>
</dbReference>
<dbReference type="PDB" id="5PC7">
    <property type="method" value="X-ray"/>
    <property type="resolution" value="1.72 A"/>
    <property type="chains" value="A=2054-2168"/>
</dbReference>
<dbReference type="PDB" id="5PC8">
    <property type="method" value="X-ray"/>
    <property type="resolution" value="1.85 A"/>
    <property type="chains" value="A=2054-2168"/>
</dbReference>
<dbReference type="PDB" id="5PC9">
    <property type="method" value="X-ray"/>
    <property type="resolution" value="1.76 A"/>
    <property type="chains" value="A=2054-2168"/>
</dbReference>
<dbReference type="PDB" id="5PCA">
    <property type="method" value="X-ray"/>
    <property type="resolution" value="1.84 A"/>
    <property type="chains" value="A=2054-2168"/>
</dbReference>
<dbReference type="PDB" id="5PCB">
    <property type="method" value="X-ray"/>
    <property type="resolution" value="1.80 A"/>
    <property type="chains" value="A=2054-2168"/>
</dbReference>
<dbReference type="PDB" id="5PCC">
    <property type="method" value="X-ray"/>
    <property type="resolution" value="1.83 A"/>
    <property type="chains" value="A=2054-2168"/>
</dbReference>
<dbReference type="PDB" id="5PCD">
    <property type="method" value="X-ray"/>
    <property type="resolution" value="1.76 A"/>
    <property type="chains" value="A=2054-2168"/>
</dbReference>
<dbReference type="PDB" id="5PCE">
    <property type="method" value="X-ray"/>
    <property type="resolution" value="2.16 A"/>
    <property type="chains" value="A=2054-2168"/>
</dbReference>
<dbReference type="PDB" id="5PCF">
    <property type="method" value="X-ray"/>
    <property type="resolution" value="2.02 A"/>
    <property type="chains" value="A=2054-2168"/>
</dbReference>
<dbReference type="PDB" id="5PCG">
    <property type="method" value="X-ray"/>
    <property type="resolution" value="1.98 A"/>
    <property type="chains" value="A=2054-2168"/>
</dbReference>
<dbReference type="PDB" id="5PCH">
    <property type="method" value="X-ray"/>
    <property type="resolution" value="1.75 A"/>
    <property type="chains" value="A=2054-2168"/>
</dbReference>
<dbReference type="PDB" id="5PCI">
    <property type="method" value="X-ray"/>
    <property type="resolution" value="1.88 A"/>
    <property type="chains" value="A=2054-2168"/>
</dbReference>
<dbReference type="PDB" id="5PCJ">
    <property type="method" value="X-ray"/>
    <property type="resolution" value="1.97 A"/>
    <property type="chains" value="A=2054-2168"/>
</dbReference>
<dbReference type="PDB" id="5PCK">
    <property type="method" value="X-ray"/>
    <property type="resolution" value="1.75 A"/>
    <property type="chains" value="A=2054-2168"/>
</dbReference>
<dbReference type="PDB" id="5PCL">
    <property type="method" value="X-ray"/>
    <property type="resolution" value="2.19 A"/>
    <property type="chains" value="A=2054-2168"/>
</dbReference>
<dbReference type="PDB" id="5PCM">
    <property type="method" value="X-ray"/>
    <property type="resolution" value="1.69 A"/>
    <property type="chains" value="A=2054-2168"/>
</dbReference>
<dbReference type="PDB" id="5PCN">
    <property type="method" value="X-ray"/>
    <property type="resolution" value="1.84 A"/>
    <property type="chains" value="A=2054-2168"/>
</dbReference>
<dbReference type="PDB" id="5PCO">
    <property type="method" value="X-ray"/>
    <property type="resolution" value="1.77 A"/>
    <property type="chains" value="A=2054-2168"/>
</dbReference>
<dbReference type="PDB" id="5PCP">
    <property type="method" value="X-ray"/>
    <property type="resolution" value="1.69 A"/>
    <property type="chains" value="A=2054-2168"/>
</dbReference>
<dbReference type="PDB" id="5PCQ">
    <property type="method" value="X-ray"/>
    <property type="resolution" value="2.29 A"/>
    <property type="chains" value="A=2054-2168"/>
</dbReference>
<dbReference type="PDB" id="5PCR">
    <property type="method" value="X-ray"/>
    <property type="resolution" value="1.90 A"/>
    <property type="chains" value="A=2054-2168"/>
</dbReference>
<dbReference type="PDB" id="5PCS">
    <property type="method" value="X-ray"/>
    <property type="resolution" value="1.83 A"/>
    <property type="chains" value="A=2054-2168"/>
</dbReference>
<dbReference type="PDB" id="5PCT">
    <property type="method" value="X-ray"/>
    <property type="resolution" value="1.78 A"/>
    <property type="chains" value="A=2054-2168"/>
</dbReference>
<dbReference type="PDB" id="5PCU">
    <property type="method" value="X-ray"/>
    <property type="resolution" value="1.75 A"/>
    <property type="chains" value="A=2054-2168"/>
</dbReference>
<dbReference type="PDB" id="5PCV">
    <property type="method" value="X-ray"/>
    <property type="resolution" value="1.65 A"/>
    <property type="chains" value="A=2054-2168"/>
</dbReference>
<dbReference type="PDB" id="5PCW">
    <property type="method" value="X-ray"/>
    <property type="resolution" value="1.70 A"/>
    <property type="chains" value="A=2054-2168"/>
</dbReference>
<dbReference type="PDB" id="5PCX">
    <property type="method" value="X-ray"/>
    <property type="resolution" value="1.79 A"/>
    <property type="chains" value="A=2054-2168"/>
</dbReference>
<dbReference type="PDB" id="5PCZ">
    <property type="method" value="X-ray"/>
    <property type="resolution" value="1.84 A"/>
    <property type="chains" value="A=2054-2168"/>
</dbReference>
<dbReference type="PDB" id="5PD0">
    <property type="method" value="X-ray"/>
    <property type="resolution" value="1.84 A"/>
    <property type="chains" value="A=2054-2168"/>
</dbReference>
<dbReference type="PDB" id="5PD1">
    <property type="method" value="X-ray"/>
    <property type="resolution" value="1.79 A"/>
    <property type="chains" value="A=2054-2168"/>
</dbReference>
<dbReference type="PDB" id="5PD2">
    <property type="method" value="X-ray"/>
    <property type="resolution" value="1.79 A"/>
    <property type="chains" value="A=2054-2168"/>
</dbReference>
<dbReference type="PDB" id="5PD3">
    <property type="method" value="X-ray"/>
    <property type="resolution" value="1.69 A"/>
    <property type="chains" value="A=2054-2168"/>
</dbReference>
<dbReference type="PDB" id="5PD4">
    <property type="method" value="X-ray"/>
    <property type="resolution" value="1.80 A"/>
    <property type="chains" value="A=2054-2168"/>
</dbReference>
<dbReference type="PDB" id="5PD5">
    <property type="method" value="X-ray"/>
    <property type="resolution" value="1.89 A"/>
    <property type="chains" value="A=2054-2168"/>
</dbReference>
<dbReference type="PDB" id="5PD6">
    <property type="method" value="X-ray"/>
    <property type="resolution" value="2.01 A"/>
    <property type="chains" value="A=2054-2168"/>
</dbReference>
<dbReference type="PDB" id="5PD7">
    <property type="method" value="X-ray"/>
    <property type="resolution" value="1.69 A"/>
    <property type="chains" value="A=2054-2168"/>
</dbReference>
<dbReference type="PDB" id="5PD8">
    <property type="method" value="X-ray"/>
    <property type="resolution" value="1.71 A"/>
    <property type="chains" value="A=2054-2168"/>
</dbReference>
<dbReference type="PDB" id="5PD9">
    <property type="method" value="X-ray"/>
    <property type="resolution" value="1.86 A"/>
    <property type="chains" value="A=2054-2168"/>
</dbReference>
<dbReference type="PDB" id="5PDA">
    <property type="method" value="X-ray"/>
    <property type="resolution" value="1.77 A"/>
    <property type="chains" value="A=2054-2168"/>
</dbReference>
<dbReference type="PDB" id="5PDB">
    <property type="method" value="X-ray"/>
    <property type="resolution" value="1.80 A"/>
    <property type="chains" value="A=2054-2168"/>
</dbReference>
<dbReference type="PDB" id="5PDC">
    <property type="method" value="X-ray"/>
    <property type="resolution" value="1.74 A"/>
    <property type="chains" value="A=2054-2168"/>
</dbReference>
<dbReference type="PDB" id="5PDD">
    <property type="method" value="X-ray"/>
    <property type="resolution" value="1.77 A"/>
    <property type="chains" value="A=2054-2168"/>
</dbReference>
<dbReference type="PDB" id="5PDE">
    <property type="method" value="X-ray"/>
    <property type="resolution" value="1.88 A"/>
    <property type="chains" value="A=2054-2168"/>
</dbReference>
<dbReference type="PDB" id="5PDF">
    <property type="method" value="X-ray"/>
    <property type="resolution" value="1.68 A"/>
    <property type="chains" value="A=2054-2168"/>
</dbReference>
<dbReference type="PDB" id="5PDG">
    <property type="method" value="X-ray"/>
    <property type="resolution" value="1.63 A"/>
    <property type="chains" value="A=2054-2168"/>
</dbReference>
<dbReference type="PDB" id="5PDH">
    <property type="method" value="X-ray"/>
    <property type="resolution" value="1.78 A"/>
    <property type="chains" value="A=2054-2168"/>
</dbReference>
<dbReference type="PDB" id="5PDI">
    <property type="method" value="X-ray"/>
    <property type="resolution" value="1.70 A"/>
    <property type="chains" value="A=2054-2168"/>
</dbReference>
<dbReference type="PDB" id="5PDJ">
    <property type="method" value="X-ray"/>
    <property type="resolution" value="1.84 A"/>
    <property type="chains" value="A=2054-2168"/>
</dbReference>
<dbReference type="PDB" id="5PDK">
    <property type="method" value="X-ray"/>
    <property type="resolution" value="1.74 A"/>
    <property type="chains" value="A=2054-2168"/>
</dbReference>
<dbReference type="PDB" id="5PDL">
    <property type="method" value="X-ray"/>
    <property type="resolution" value="1.80 A"/>
    <property type="chains" value="A=2054-2168"/>
</dbReference>
<dbReference type="PDB" id="5PDM">
    <property type="method" value="X-ray"/>
    <property type="resolution" value="1.71 A"/>
    <property type="chains" value="A=2054-2168"/>
</dbReference>
<dbReference type="PDB" id="5PDN">
    <property type="method" value="X-ray"/>
    <property type="resolution" value="1.71 A"/>
    <property type="chains" value="A=2054-2168"/>
</dbReference>
<dbReference type="PDB" id="5PDO">
    <property type="method" value="X-ray"/>
    <property type="resolution" value="1.78 A"/>
    <property type="chains" value="A=2054-2168"/>
</dbReference>
<dbReference type="PDB" id="5PDP">
    <property type="method" value="X-ray"/>
    <property type="resolution" value="1.70 A"/>
    <property type="chains" value="A=2054-2168"/>
</dbReference>
<dbReference type="PDB" id="5PDQ">
    <property type="method" value="X-ray"/>
    <property type="resolution" value="2.26 A"/>
    <property type="chains" value="A=2054-2168"/>
</dbReference>
<dbReference type="PDB" id="5PDR">
    <property type="method" value="X-ray"/>
    <property type="resolution" value="1.70 A"/>
    <property type="chains" value="A=2054-2168"/>
</dbReference>
<dbReference type="PDB" id="5PDS">
    <property type="method" value="X-ray"/>
    <property type="resolution" value="1.78 A"/>
    <property type="chains" value="A=2054-2168"/>
</dbReference>
<dbReference type="PDB" id="5PDT">
    <property type="method" value="X-ray"/>
    <property type="resolution" value="1.79 A"/>
    <property type="chains" value="A=2054-2168"/>
</dbReference>
<dbReference type="PDB" id="5PDU">
    <property type="method" value="X-ray"/>
    <property type="resolution" value="1.70 A"/>
    <property type="chains" value="A=2054-2168"/>
</dbReference>
<dbReference type="PDB" id="5PDV">
    <property type="method" value="X-ray"/>
    <property type="resolution" value="1.69 A"/>
    <property type="chains" value="A=2054-2168"/>
</dbReference>
<dbReference type="PDB" id="5PDW">
    <property type="method" value="X-ray"/>
    <property type="resolution" value="1.88 A"/>
    <property type="chains" value="A=2054-2168"/>
</dbReference>
<dbReference type="PDB" id="5PDX">
    <property type="method" value="X-ray"/>
    <property type="resolution" value="1.69 A"/>
    <property type="chains" value="A=2054-2168"/>
</dbReference>
<dbReference type="PDB" id="5PDY">
    <property type="method" value="X-ray"/>
    <property type="resolution" value="1.93 A"/>
    <property type="chains" value="A=2054-2168"/>
</dbReference>
<dbReference type="PDB" id="5PDZ">
    <property type="method" value="X-ray"/>
    <property type="resolution" value="1.90 A"/>
    <property type="chains" value="A=2054-2168"/>
</dbReference>
<dbReference type="PDB" id="5PE0">
    <property type="method" value="X-ray"/>
    <property type="resolution" value="1.76 A"/>
    <property type="chains" value="A=2054-2168"/>
</dbReference>
<dbReference type="PDB" id="5PE1">
    <property type="method" value="X-ray"/>
    <property type="resolution" value="1.91 A"/>
    <property type="chains" value="A=2054-2168"/>
</dbReference>
<dbReference type="PDB" id="5PE2">
    <property type="method" value="X-ray"/>
    <property type="resolution" value="1.71 A"/>
    <property type="chains" value="A=2054-2168"/>
</dbReference>
<dbReference type="PDB" id="5PE3">
    <property type="method" value="X-ray"/>
    <property type="resolution" value="1.76 A"/>
    <property type="chains" value="A=2054-2168"/>
</dbReference>
<dbReference type="PDB" id="5PE4">
    <property type="method" value="X-ray"/>
    <property type="resolution" value="1.74 A"/>
    <property type="chains" value="A=2054-2168"/>
</dbReference>
<dbReference type="PDB" id="5PE5">
    <property type="method" value="X-ray"/>
    <property type="resolution" value="1.65 A"/>
    <property type="chains" value="A=2054-2168"/>
</dbReference>
<dbReference type="PDB" id="5PE6">
    <property type="method" value="X-ray"/>
    <property type="resolution" value="1.67 A"/>
    <property type="chains" value="A=2054-2168"/>
</dbReference>
<dbReference type="PDB" id="5PE7">
    <property type="method" value="X-ray"/>
    <property type="resolution" value="1.81 A"/>
    <property type="chains" value="A=2054-2168"/>
</dbReference>
<dbReference type="PDB" id="5PE8">
    <property type="method" value="X-ray"/>
    <property type="resolution" value="1.65 A"/>
    <property type="chains" value="A=2054-2168"/>
</dbReference>
<dbReference type="PDB" id="5PE9">
    <property type="method" value="X-ray"/>
    <property type="resolution" value="1.72 A"/>
    <property type="chains" value="A=2054-2168"/>
</dbReference>
<dbReference type="PDB" id="5PEA">
    <property type="method" value="X-ray"/>
    <property type="resolution" value="1.65 A"/>
    <property type="chains" value="A=2054-2168"/>
</dbReference>
<dbReference type="PDB" id="5PEB">
    <property type="method" value="X-ray"/>
    <property type="resolution" value="2.11 A"/>
    <property type="chains" value="A=2054-2168"/>
</dbReference>
<dbReference type="PDB" id="5PEC">
    <property type="method" value="X-ray"/>
    <property type="resolution" value="1.85 A"/>
    <property type="chains" value="A=2054-2168"/>
</dbReference>
<dbReference type="PDB" id="5PED">
    <property type="method" value="X-ray"/>
    <property type="resolution" value="1.80 A"/>
    <property type="chains" value="A=2054-2168"/>
</dbReference>
<dbReference type="PDB" id="5PEE">
    <property type="method" value="X-ray"/>
    <property type="resolution" value="1.75 A"/>
    <property type="chains" value="A=2054-2168"/>
</dbReference>
<dbReference type="PDB" id="5PEF">
    <property type="method" value="X-ray"/>
    <property type="resolution" value="1.73 A"/>
    <property type="chains" value="A=2054-2168"/>
</dbReference>
<dbReference type="PDB" id="5PEG">
    <property type="method" value="X-ray"/>
    <property type="resolution" value="1.69 A"/>
    <property type="chains" value="A=2054-2168"/>
</dbReference>
<dbReference type="PDB" id="5PEH">
    <property type="method" value="X-ray"/>
    <property type="resolution" value="1.71 A"/>
    <property type="chains" value="A=2054-2168"/>
</dbReference>
<dbReference type="PDB" id="5PEI">
    <property type="method" value="X-ray"/>
    <property type="resolution" value="1.66 A"/>
    <property type="chains" value="A=2054-2168"/>
</dbReference>
<dbReference type="PDB" id="5PEJ">
    <property type="method" value="X-ray"/>
    <property type="resolution" value="1.71 A"/>
    <property type="chains" value="A=2054-2168"/>
</dbReference>
<dbReference type="PDB" id="5PEK">
    <property type="method" value="X-ray"/>
    <property type="resolution" value="1.79 A"/>
    <property type="chains" value="A=2054-2168"/>
</dbReference>
<dbReference type="PDB" id="5PEL">
    <property type="method" value="X-ray"/>
    <property type="resolution" value="1.70 A"/>
    <property type="chains" value="A=2054-2168"/>
</dbReference>
<dbReference type="PDB" id="5PEM">
    <property type="method" value="X-ray"/>
    <property type="resolution" value="1.97 A"/>
    <property type="chains" value="A=2054-2168"/>
</dbReference>
<dbReference type="PDB" id="5PEN">
    <property type="method" value="X-ray"/>
    <property type="resolution" value="1.72 A"/>
    <property type="chains" value="A=2054-2168"/>
</dbReference>
<dbReference type="PDB" id="5PEO">
    <property type="method" value="X-ray"/>
    <property type="resolution" value="1.70 A"/>
    <property type="chains" value="A=2054-2168"/>
</dbReference>
<dbReference type="PDB" id="5PEQ">
    <property type="method" value="X-ray"/>
    <property type="resolution" value="1.75 A"/>
    <property type="chains" value="A=2054-2168"/>
</dbReference>
<dbReference type="PDB" id="5PER">
    <property type="method" value="X-ray"/>
    <property type="resolution" value="2.00 A"/>
    <property type="chains" value="A=2054-2168"/>
</dbReference>
<dbReference type="PDB" id="5PES">
    <property type="method" value="X-ray"/>
    <property type="resolution" value="1.80 A"/>
    <property type="chains" value="A=2054-2168"/>
</dbReference>
<dbReference type="PDB" id="5PET">
    <property type="method" value="X-ray"/>
    <property type="resolution" value="1.72 A"/>
    <property type="chains" value="A=2054-2168"/>
</dbReference>
<dbReference type="PDB" id="5PEU">
    <property type="method" value="X-ray"/>
    <property type="resolution" value="1.90 A"/>
    <property type="chains" value="A=2054-2168"/>
</dbReference>
<dbReference type="PDB" id="5PEV">
    <property type="method" value="X-ray"/>
    <property type="resolution" value="1.81 A"/>
    <property type="chains" value="A=2054-2168"/>
</dbReference>
<dbReference type="PDB" id="5PEW">
    <property type="method" value="X-ray"/>
    <property type="resolution" value="1.77 A"/>
    <property type="chains" value="A=2054-2168"/>
</dbReference>
<dbReference type="PDB" id="5PEX">
    <property type="method" value="X-ray"/>
    <property type="resolution" value="1.79 A"/>
    <property type="chains" value="A=2054-2168"/>
</dbReference>
<dbReference type="PDB" id="5PEY">
    <property type="method" value="X-ray"/>
    <property type="resolution" value="1.80 A"/>
    <property type="chains" value="A=2054-2168"/>
</dbReference>
<dbReference type="PDB" id="5PEZ">
    <property type="method" value="X-ray"/>
    <property type="resolution" value="1.70 A"/>
    <property type="chains" value="A=2054-2168"/>
</dbReference>
<dbReference type="PDB" id="5PF0">
    <property type="method" value="X-ray"/>
    <property type="resolution" value="1.95 A"/>
    <property type="chains" value="A=2054-2168"/>
</dbReference>
<dbReference type="PDB" id="5PF1">
    <property type="method" value="X-ray"/>
    <property type="resolution" value="1.78 A"/>
    <property type="chains" value="A=2054-2168"/>
</dbReference>
<dbReference type="PDB" id="5PF2">
    <property type="method" value="X-ray"/>
    <property type="resolution" value="1.89 A"/>
    <property type="chains" value="A=2054-2168"/>
</dbReference>
<dbReference type="PDB" id="5PF3">
    <property type="method" value="X-ray"/>
    <property type="resolution" value="1.83 A"/>
    <property type="chains" value="A=2054-2168"/>
</dbReference>
<dbReference type="PDB" id="5PF4">
    <property type="method" value="X-ray"/>
    <property type="resolution" value="2.01 A"/>
    <property type="chains" value="A=2054-2168"/>
</dbReference>
<dbReference type="PDB" id="5PF5">
    <property type="method" value="X-ray"/>
    <property type="resolution" value="1.71 A"/>
    <property type="chains" value="A=2054-2168"/>
</dbReference>
<dbReference type="PDB" id="5PF6">
    <property type="method" value="X-ray"/>
    <property type="resolution" value="1.75 A"/>
    <property type="chains" value="A=2054-2168"/>
</dbReference>
<dbReference type="PDB" id="5PF7">
    <property type="method" value="X-ray"/>
    <property type="resolution" value="1.79 A"/>
    <property type="chains" value="A=2054-2168"/>
</dbReference>
<dbReference type="PDB" id="5PF8">
    <property type="method" value="X-ray"/>
    <property type="resolution" value="1.78 A"/>
    <property type="chains" value="A=2054-2168"/>
</dbReference>
<dbReference type="PDB" id="5PF9">
    <property type="method" value="X-ray"/>
    <property type="resolution" value="1.91 A"/>
    <property type="chains" value="A=2054-2168"/>
</dbReference>
<dbReference type="PDB" id="5PFA">
    <property type="method" value="X-ray"/>
    <property type="resolution" value="1.65 A"/>
    <property type="chains" value="A=2054-2168"/>
</dbReference>
<dbReference type="PDB" id="5PFB">
    <property type="method" value="X-ray"/>
    <property type="resolution" value="1.80 A"/>
    <property type="chains" value="A=2054-2168"/>
</dbReference>
<dbReference type="PDB" id="5PFC">
    <property type="method" value="X-ray"/>
    <property type="resolution" value="1.75 A"/>
    <property type="chains" value="A=2054-2168"/>
</dbReference>
<dbReference type="PDB" id="5PFD">
    <property type="method" value="X-ray"/>
    <property type="resolution" value="1.88 A"/>
    <property type="chains" value="A=2054-2168"/>
</dbReference>
<dbReference type="PDB" id="5PFE">
    <property type="method" value="X-ray"/>
    <property type="resolution" value="1.79 A"/>
    <property type="chains" value="A=2054-2168"/>
</dbReference>
<dbReference type="PDB" id="5PFF">
    <property type="method" value="X-ray"/>
    <property type="resolution" value="1.96 A"/>
    <property type="chains" value="A=2054-2168"/>
</dbReference>
<dbReference type="PDB" id="5PFG">
    <property type="method" value="X-ray"/>
    <property type="resolution" value="1.68 A"/>
    <property type="chains" value="A=2054-2168"/>
</dbReference>
<dbReference type="PDB" id="5PFH">
    <property type="method" value="X-ray"/>
    <property type="resolution" value="1.66 A"/>
    <property type="chains" value="A=2054-2168"/>
</dbReference>
<dbReference type="PDB" id="5PFI">
    <property type="method" value="X-ray"/>
    <property type="resolution" value="1.66 A"/>
    <property type="chains" value="A=2054-2168"/>
</dbReference>
<dbReference type="PDB" id="5PFJ">
    <property type="method" value="X-ray"/>
    <property type="resolution" value="2.07 A"/>
    <property type="chains" value="A=2054-2168"/>
</dbReference>
<dbReference type="PDB" id="5PFL">
    <property type="method" value="X-ray"/>
    <property type="resolution" value="1.71 A"/>
    <property type="chains" value="A=2054-2168"/>
</dbReference>
<dbReference type="PDB" id="5PFM">
    <property type="method" value="X-ray"/>
    <property type="resolution" value="1.54 A"/>
    <property type="chains" value="A=2054-2168"/>
</dbReference>
<dbReference type="PDB" id="5PFN">
    <property type="method" value="X-ray"/>
    <property type="resolution" value="1.72 A"/>
    <property type="chains" value="A=2054-2168"/>
</dbReference>
<dbReference type="PDB" id="5PFO">
    <property type="method" value="X-ray"/>
    <property type="resolution" value="1.82 A"/>
    <property type="chains" value="A=2054-2168"/>
</dbReference>
<dbReference type="PDB" id="5PFP">
    <property type="method" value="X-ray"/>
    <property type="resolution" value="1.65 A"/>
    <property type="chains" value="A=2054-2168"/>
</dbReference>
<dbReference type="PDB" id="5PFQ">
    <property type="method" value="X-ray"/>
    <property type="resolution" value="1.78 A"/>
    <property type="chains" value="A=2054-2168"/>
</dbReference>
<dbReference type="PDB" id="5PFR">
    <property type="method" value="X-ray"/>
    <property type="resolution" value="1.89 A"/>
    <property type="chains" value="A=2054-2168"/>
</dbReference>
<dbReference type="PDB" id="5PFS">
    <property type="method" value="X-ray"/>
    <property type="resolution" value="2.00 A"/>
    <property type="chains" value="A=2054-2168"/>
</dbReference>
<dbReference type="PDB" id="5PFT">
    <property type="method" value="X-ray"/>
    <property type="resolution" value="2.02 A"/>
    <property type="chains" value="A=2054-2168"/>
</dbReference>
<dbReference type="PDB" id="5PFU">
    <property type="method" value="X-ray"/>
    <property type="resolution" value="1.75 A"/>
    <property type="chains" value="A=2054-2168"/>
</dbReference>
<dbReference type="PDB" id="5PFV">
    <property type="method" value="X-ray"/>
    <property type="resolution" value="1.72 A"/>
    <property type="chains" value="A=2054-2168"/>
</dbReference>
<dbReference type="PDB" id="5PFW">
    <property type="method" value="X-ray"/>
    <property type="resolution" value="1.64 A"/>
    <property type="chains" value="A=2054-2168"/>
</dbReference>
<dbReference type="PDB" id="5PFX">
    <property type="method" value="X-ray"/>
    <property type="resolution" value="1.90 A"/>
    <property type="chains" value="A=2054-2168"/>
</dbReference>
<dbReference type="PDB" id="5PFY">
    <property type="method" value="X-ray"/>
    <property type="resolution" value="1.65 A"/>
    <property type="chains" value="A=2054-2168"/>
</dbReference>
<dbReference type="PDB" id="5PFZ">
    <property type="method" value="X-ray"/>
    <property type="resolution" value="1.72 A"/>
    <property type="chains" value="A=2054-2168"/>
</dbReference>
<dbReference type="PDB" id="5PG0">
    <property type="method" value="X-ray"/>
    <property type="resolution" value="1.71 A"/>
    <property type="chains" value="A=2054-2168"/>
</dbReference>
<dbReference type="PDB" id="5PG1">
    <property type="method" value="X-ray"/>
    <property type="resolution" value="1.49 A"/>
    <property type="chains" value="A=2054-2168"/>
</dbReference>
<dbReference type="PDB" id="5PG2">
    <property type="method" value="X-ray"/>
    <property type="resolution" value="1.68 A"/>
    <property type="chains" value="A=2054-2168"/>
</dbReference>
<dbReference type="PDB" id="5PG3">
    <property type="method" value="X-ray"/>
    <property type="resolution" value="1.66 A"/>
    <property type="chains" value="A=2054-2168"/>
</dbReference>
<dbReference type="PDB" id="5PG4">
    <property type="method" value="X-ray"/>
    <property type="resolution" value="2.49 A"/>
    <property type="chains" value="A=2054-2168"/>
</dbReference>
<dbReference type="PDB" id="5PG5">
    <property type="method" value="X-ray"/>
    <property type="resolution" value="1.75 A"/>
    <property type="chains" value="A=2054-2168"/>
</dbReference>
<dbReference type="PDB" id="5PG6">
    <property type="method" value="X-ray"/>
    <property type="resolution" value="1.65 A"/>
    <property type="chains" value="A=2054-2168"/>
</dbReference>
<dbReference type="PDB" id="5PG7">
    <property type="method" value="X-ray"/>
    <property type="resolution" value="1.96 A"/>
    <property type="chains" value="A=2054-2168"/>
</dbReference>
<dbReference type="PDB" id="5PG8">
    <property type="method" value="X-ray"/>
    <property type="resolution" value="1.69 A"/>
    <property type="chains" value="A=2054-2168"/>
</dbReference>
<dbReference type="PDB" id="5PG9">
    <property type="method" value="X-ray"/>
    <property type="resolution" value="1.62 A"/>
    <property type="chains" value="A=2054-2168"/>
</dbReference>
<dbReference type="PDB" id="5PGA">
    <property type="method" value="X-ray"/>
    <property type="resolution" value="1.59 A"/>
    <property type="chains" value="A=2054-2168"/>
</dbReference>
<dbReference type="PDB" id="5PGB">
    <property type="method" value="X-ray"/>
    <property type="resolution" value="1.57 A"/>
    <property type="chains" value="A=2054-2168"/>
</dbReference>
<dbReference type="PDB" id="5PGC">
    <property type="method" value="X-ray"/>
    <property type="resolution" value="1.61 A"/>
    <property type="chains" value="A=2054-2168"/>
</dbReference>
<dbReference type="PDB" id="5PGD">
    <property type="method" value="X-ray"/>
    <property type="resolution" value="1.79 A"/>
    <property type="chains" value="A=2054-2168"/>
</dbReference>
<dbReference type="PDB" id="5PGE">
    <property type="method" value="X-ray"/>
    <property type="resolution" value="1.70 A"/>
    <property type="chains" value="A=2054-2168"/>
</dbReference>
<dbReference type="PDB" id="5PGF">
    <property type="method" value="X-ray"/>
    <property type="resolution" value="1.82 A"/>
    <property type="chains" value="A=2054-2168"/>
</dbReference>
<dbReference type="PDB" id="5PGG">
    <property type="method" value="X-ray"/>
    <property type="resolution" value="1.68 A"/>
    <property type="chains" value="A=2054-2168"/>
</dbReference>
<dbReference type="PDB" id="5PGH">
    <property type="method" value="X-ray"/>
    <property type="resolution" value="1.93 A"/>
    <property type="chains" value="A=2054-2168"/>
</dbReference>
<dbReference type="PDB" id="5PGI">
    <property type="method" value="X-ray"/>
    <property type="resolution" value="1.88 A"/>
    <property type="chains" value="A=2054-2168"/>
</dbReference>
<dbReference type="PDB" id="5PGJ">
    <property type="method" value="X-ray"/>
    <property type="resolution" value="1.58 A"/>
    <property type="chains" value="A=2054-2168"/>
</dbReference>
<dbReference type="PDB" id="5PGK">
    <property type="method" value="X-ray"/>
    <property type="resolution" value="1.83 A"/>
    <property type="chains" value="A=2054-2168"/>
</dbReference>
<dbReference type="PDB" id="5PGL">
    <property type="method" value="X-ray"/>
    <property type="resolution" value="2.23 A"/>
    <property type="chains" value="A=2054-2168"/>
</dbReference>
<dbReference type="PDB" id="5PGN">
    <property type="method" value="X-ray"/>
    <property type="resolution" value="1.79 A"/>
    <property type="chains" value="A=2054-2168"/>
</dbReference>
<dbReference type="PDB" id="5PGO">
    <property type="method" value="X-ray"/>
    <property type="resolution" value="1.88 A"/>
    <property type="chains" value="A=2054-2168"/>
</dbReference>
<dbReference type="PDB" id="5PGP">
    <property type="method" value="X-ray"/>
    <property type="resolution" value="1.76 A"/>
    <property type="chains" value="A=2054-2168"/>
</dbReference>
<dbReference type="PDB" id="5PGQ">
    <property type="method" value="X-ray"/>
    <property type="resolution" value="1.71 A"/>
    <property type="chains" value="A=2054-2168"/>
</dbReference>
<dbReference type="PDB" id="5PGR">
    <property type="method" value="X-ray"/>
    <property type="resolution" value="2.00 A"/>
    <property type="chains" value="A=2054-2168"/>
</dbReference>
<dbReference type="PDB" id="5PGS">
    <property type="method" value="X-ray"/>
    <property type="resolution" value="1.64 A"/>
    <property type="chains" value="A=2054-2168"/>
</dbReference>
<dbReference type="PDB" id="5PGT">
    <property type="method" value="X-ray"/>
    <property type="resolution" value="1.72 A"/>
    <property type="chains" value="A=2054-2168"/>
</dbReference>
<dbReference type="PDB" id="6FGT">
    <property type="method" value="X-ray"/>
    <property type="resolution" value="2.00 A"/>
    <property type="chains" value="A=2054-2168"/>
</dbReference>
<dbReference type="PDB" id="6FGU">
    <property type="method" value="X-ray"/>
    <property type="resolution" value="2.05 A"/>
    <property type="chains" value="A=2054-2168"/>
</dbReference>
<dbReference type="PDB" id="6FH6">
    <property type="method" value="X-ray"/>
    <property type="resolution" value="2.08 A"/>
    <property type="chains" value="A=2054-2168"/>
</dbReference>
<dbReference type="PDB" id="6FH7">
    <property type="method" value="X-ray"/>
    <property type="resolution" value="2.10 A"/>
    <property type="chains" value="A=2054-2168"/>
</dbReference>
<dbReference type="PDB" id="6FHQ">
    <property type="method" value="X-ray"/>
    <property type="resolution" value="1.95 A"/>
    <property type="chains" value="A/B=1928-1983"/>
</dbReference>
<dbReference type="PDB" id="6FI1">
    <property type="method" value="X-ray"/>
    <property type="resolution" value="2.70 A"/>
    <property type="chains" value="A/B=1928-1983"/>
</dbReference>
<dbReference type="PDB" id="7Q42">
    <property type="method" value="X-ray"/>
    <property type="resolution" value="1.95 A"/>
    <property type="chains" value="B/D/F=649-663"/>
</dbReference>
<dbReference type="PDB" id="7WIN">
    <property type="method" value="X-ray"/>
    <property type="resolution" value="1.95 A"/>
    <property type="chains" value="A/B=736-846"/>
</dbReference>
<dbReference type="PDBsum" id="2E7O"/>
<dbReference type="PDBsum" id="3G0L"/>
<dbReference type="PDBsum" id="3Q2F"/>
<dbReference type="PDBsum" id="4CUP"/>
<dbReference type="PDBsum" id="4CUQ"/>
<dbReference type="PDBsum" id="4CUR"/>
<dbReference type="PDBsum" id="4CUS"/>
<dbReference type="PDBsum" id="4CUT"/>
<dbReference type="PDBsum" id="4CUU"/>
<dbReference type="PDBsum" id="4IR3"/>
<dbReference type="PDBsum" id="4IR4"/>
<dbReference type="PDBsum" id="4IR5"/>
<dbReference type="PDBsum" id="4IR6"/>
<dbReference type="PDBsum" id="4NR9"/>
<dbReference type="PDBsum" id="4NRA"/>
<dbReference type="PDBsum" id="4NRB"/>
<dbReference type="PDBsum" id="4NRC"/>
<dbReference type="PDBsum" id="4QC1"/>
<dbReference type="PDBsum" id="4QC3"/>
<dbReference type="PDBsum" id="4QF3"/>
<dbReference type="PDBsum" id="4RVR"/>
<dbReference type="PDBsum" id="4XUA"/>
<dbReference type="PDBsum" id="4XUB"/>
<dbReference type="PDBsum" id="5CQ3"/>
<dbReference type="PDBsum" id="5CQ4"/>
<dbReference type="PDBsum" id="5CQ5"/>
<dbReference type="PDBsum" id="5CQ6"/>
<dbReference type="PDBsum" id="5CQ7"/>
<dbReference type="PDBsum" id="5CQ8"/>
<dbReference type="PDBsum" id="5CQA"/>
<dbReference type="PDBsum" id="5CU8"/>
<dbReference type="PDBsum" id="5CUA"/>
<dbReference type="PDBsum" id="5CUB"/>
<dbReference type="PDBsum" id="5CUC"/>
<dbReference type="PDBsum" id="5CUD"/>
<dbReference type="PDBsum" id="5CUE"/>
<dbReference type="PDBsum" id="5CUG"/>
<dbReference type="PDBsum" id="5DYU"/>
<dbReference type="PDBsum" id="5DYX"/>
<dbReference type="PDBsum" id="5E73"/>
<dbReference type="PDBsum" id="5E74"/>
<dbReference type="PDBsum" id="5E9I"/>
<dbReference type="PDBsum" id="5E9K"/>
<dbReference type="PDBsum" id="5E9L"/>
<dbReference type="PDBsum" id="5E9M"/>
<dbReference type="PDBsum" id="5E9Y"/>
<dbReference type="PDBsum" id="5L8T"/>
<dbReference type="PDBsum" id="5L8U"/>
<dbReference type="PDBsum" id="5L96"/>
<dbReference type="PDBsum" id="5L97"/>
<dbReference type="PDBsum" id="5L98"/>
<dbReference type="PDBsum" id="5L99"/>
<dbReference type="PDBsum" id="5MGE"/>
<dbReference type="PDBsum" id="5MGF"/>
<dbReference type="PDBsum" id="5MGG"/>
<dbReference type="PDBsum" id="5OR9"/>
<dbReference type="PDBsum" id="5ORB"/>
<dbReference type="PDBsum" id="5PB7"/>
<dbReference type="PDBsum" id="5PB8"/>
<dbReference type="PDBsum" id="5PB9"/>
<dbReference type="PDBsum" id="5PBA"/>
<dbReference type="PDBsum" id="5PBB"/>
<dbReference type="PDBsum" id="5PBC"/>
<dbReference type="PDBsum" id="5PBD"/>
<dbReference type="PDBsum" id="5PBE"/>
<dbReference type="PDBsum" id="5PBF"/>
<dbReference type="PDBsum" id="5PBG"/>
<dbReference type="PDBsum" id="5PBH"/>
<dbReference type="PDBsum" id="5PBI"/>
<dbReference type="PDBsum" id="5PBJ"/>
<dbReference type="PDBsum" id="5PBK"/>
<dbReference type="PDBsum" id="5PBL"/>
<dbReference type="PDBsum" id="5PBM"/>
<dbReference type="PDBsum" id="5PBN"/>
<dbReference type="PDBsum" id="5PBO"/>
<dbReference type="PDBsum" id="5PBP"/>
<dbReference type="PDBsum" id="5PBQ"/>
<dbReference type="PDBsum" id="5PBR"/>
<dbReference type="PDBsum" id="5PBS"/>
<dbReference type="PDBsum" id="5PBT"/>
<dbReference type="PDBsum" id="5PBU"/>
<dbReference type="PDBsum" id="5PBV"/>
<dbReference type="PDBsum" id="5PBW"/>
<dbReference type="PDBsum" id="5PBX"/>
<dbReference type="PDBsum" id="5PBY"/>
<dbReference type="PDBsum" id="5PBZ"/>
<dbReference type="PDBsum" id="5PC0"/>
<dbReference type="PDBsum" id="5PC1"/>
<dbReference type="PDBsum" id="5PC2"/>
<dbReference type="PDBsum" id="5PC3"/>
<dbReference type="PDBsum" id="5PC4"/>
<dbReference type="PDBsum" id="5PC5"/>
<dbReference type="PDBsum" id="5PC6"/>
<dbReference type="PDBsum" id="5PC7"/>
<dbReference type="PDBsum" id="5PC8"/>
<dbReference type="PDBsum" id="5PC9"/>
<dbReference type="PDBsum" id="5PCA"/>
<dbReference type="PDBsum" id="5PCB"/>
<dbReference type="PDBsum" id="5PCC"/>
<dbReference type="PDBsum" id="5PCD"/>
<dbReference type="PDBsum" id="5PCE"/>
<dbReference type="PDBsum" id="5PCF"/>
<dbReference type="PDBsum" id="5PCG"/>
<dbReference type="PDBsum" id="5PCH"/>
<dbReference type="PDBsum" id="5PCI"/>
<dbReference type="PDBsum" id="5PCJ"/>
<dbReference type="PDBsum" id="5PCK"/>
<dbReference type="PDBsum" id="5PCL"/>
<dbReference type="PDBsum" id="5PCM"/>
<dbReference type="PDBsum" id="5PCN"/>
<dbReference type="PDBsum" id="5PCO"/>
<dbReference type="PDBsum" id="5PCP"/>
<dbReference type="PDBsum" id="5PCQ"/>
<dbReference type="PDBsum" id="5PCR"/>
<dbReference type="PDBsum" id="5PCS"/>
<dbReference type="PDBsum" id="5PCT"/>
<dbReference type="PDBsum" id="5PCU"/>
<dbReference type="PDBsum" id="5PCV"/>
<dbReference type="PDBsum" id="5PCW"/>
<dbReference type="PDBsum" id="5PCX"/>
<dbReference type="PDBsum" id="5PCZ"/>
<dbReference type="PDBsum" id="5PD0"/>
<dbReference type="PDBsum" id="5PD1"/>
<dbReference type="PDBsum" id="5PD2"/>
<dbReference type="PDBsum" id="5PD3"/>
<dbReference type="PDBsum" id="5PD4"/>
<dbReference type="PDBsum" id="5PD5"/>
<dbReference type="PDBsum" id="5PD6"/>
<dbReference type="PDBsum" id="5PD7"/>
<dbReference type="PDBsum" id="5PD8"/>
<dbReference type="PDBsum" id="5PD9"/>
<dbReference type="PDBsum" id="5PDA"/>
<dbReference type="PDBsum" id="5PDB"/>
<dbReference type="PDBsum" id="5PDC"/>
<dbReference type="PDBsum" id="5PDD"/>
<dbReference type="PDBsum" id="5PDE"/>
<dbReference type="PDBsum" id="5PDF"/>
<dbReference type="PDBsum" id="5PDG"/>
<dbReference type="PDBsum" id="5PDH"/>
<dbReference type="PDBsum" id="5PDI"/>
<dbReference type="PDBsum" id="5PDJ"/>
<dbReference type="PDBsum" id="5PDK"/>
<dbReference type="PDBsum" id="5PDL"/>
<dbReference type="PDBsum" id="5PDM"/>
<dbReference type="PDBsum" id="5PDN"/>
<dbReference type="PDBsum" id="5PDO"/>
<dbReference type="PDBsum" id="5PDP"/>
<dbReference type="PDBsum" id="5PDQ"/>
<dbReference type="PDBsum" id="5PDR"/>
<dbReference type="PDBsum" id="5PDS"/>
<dbReference type="PDBsum" id="5PDT"/>
<dbReference type="PDBsum" id="5PDU"/>
<dbReference type="PDBsum" id="5PDV"/>
<dbReference type="PDBsum" id="5PDW"/>
<dbReference type="PDBsum" id="5PDX"/>
<dbReference type="PDBsum" id="5PDY"/>
<dbReference type="PDBsum" id="5PDZ"/>
<dbReference type="PDBsum" id="5PE0"/>
<dbReference type="PDBsum" id="5PE1"/>
<dbReference type="PDBsum" id="5PE2"/>
<dbReference type="PDBsum" id="5PE3"/>
<dbReference type="PDBsum" id="5PE4"/>
<dbReference type="PDBsum" id="5PE5"/>
<dbReference type="PDBsum" id="5PE6"/>
<dbReference type="PDBsum" id="5PE7"/>
<dbReference type="PDBsum" id="5PE8"/>
<dbReference type="PDBsum" id="5PE9"/>
<dbReference type="PDBsum" id="5PEA"/>
<dbReference type="PDBsum" id="5PEB"/>
<dbReference type="PDBsum" id="5PEC"/>
<dbReference type="PDBsum" id="5PED"/>
<dbReference type="PDBsum" id="5PEE"/>
<dbReference type="PDBsum" id="5PEF"/>
<dbReference type="PDBsum" id="5PEG"/>
<dbReference type="PDBsum" id="5PEH"/>
<dbReference type="PDBsum" id="5PEI"/>
<dbReference type="PDBsum" id="5PEJ"/>
<dbReference type="PDBsum" id="5PEK"/>
<dbReference type="PDBsum" id="5PEL"/>
<dbReference type="PDBsum" id="5PEM"/>
<dbReference type="PDBsum" id="5PEN"/>
<dbReference type="PDBsum" id="5PEO"/>
<dbReference type="PDBsum" id="5PEQ"/>
<dbReference type="PDBsum" id="5PER"/>
<dbReference type="PDBsum" id="5PES"/>
<dbReference type="PDBsum" id="5PET"/>
<dbReference type="PDBsum" id="5PEU"/>
<dbReference type="PDBsum" id="5PEV"/>
<dbReference type="PDBsum" id="5PEW"/>
<dbReference type="PDBsum" id="5PEX"/>
<dbReference type="PDBsum" id="5PEY"/>
<dbReference type="PDBsum" id="5PEZ"/>
<dbReference type="PDBsum" id="5PF0"/>
<dbReference type="PDBsum" id="5PF1"/>
<dbReference type="PDBsum" id="5PF2"/>
<dbReference type="PDBsum" id="5PF3"/>
<dbReference type="PDBsum" id="5PF4"/>
<dbReference type="PDBsum" id="5PF5"/>
<dbReference type="PDBsum" id="5PF6"/>
<dbReference type="PDBsum" id="5PF7"/>
<dbReference type="PDBsum" id="5PF8"/>
<dbReference type="PDBsum" id="5PF9"/>
<dbReference type="PDBsum" id="5PFA"/>
<dbReference type="PDBsum" id="5PFB"/>
<dbReference type="PDBsum" id="5PFC"/>
<dbReference type="PDBsum" id="5PFD"/>
<dbReference type="PDBsum" id="5PFE"/>
<dbReference type="PDBsum" id="5PFF"/>
<dbReference type="PDBsum" id="5PFG"/>
<dbReference type="PDBsum" id="5PFH"/>
<dbReference type="PDBsum" id="5PFI"/>
<dbReference type="PDBsum" id="5PFJ"/>
<dbReference type="PDBsum" id="5PFL"/>
<dbReference type="PDBsum" id="5PFM"/>
<dbReference type="PDBsum" id="5PFN"/>
<dbReference type="PDBsum" id="5PFO"/>
<dbReference type="PDBsum" id="5PFP"/>
<dbReference type="PDBsum" id="5PFQ"/>
<dbReference type="PDBsum" id="5PFR"/>
<dbReference type="PDBsum" id="5PFS"/>
<dbReference type="PDBsum" id="5PFT"/>
<dbReference type="PDBsum" id="5PFU"/>
<dbReference type="PDBsum" id="5PFV"/>
<dbReference type="PDBsum" id="5PFW"/>
<dbReference type="PDBsum" id="5PFX"/>
<dbReference type="PDBsum" id="5PFY"/>
<dbReference type="PDBsum" id="5PFZ"/>
<dbReference type="PDBsum" id="5PG0"/>
<dbReference type="PDBsum" id="5PG1"/>
<dbReference type="PDBsum" id="5PG2"/>
<dbReference type="PDBsum" id="5PG3"/>
<dbReference type="PDBsum" id="5PG4"/>
<dbReference type="PDBsum" id="5PG5"/>
<dbReference type="PDBsum" id="5PG6"/>
<dbReference type="PDBsum" id="5PG7"/>
<dbReference type="PDBsum" id="5PG8"/>
<dbReference type="PDBsum" id="5PG9"/>
<dbReference type="PDBsum" id="5PGA"/>
<dbReference type="PDBsum" id="5PGB"/>
<dbReference type="PDBsum" id="5PGC"/>
<dbReference type="PDBsum" id="5PGD"/>
<dbReference type="PDBsum" id="5PGE"/>
<dbReference type="PDBsum" id="5PGF"/>
<dbReference type="PDBsum" id="5PGG"/>
<dbReference type="PDBsum" id="5PGH"/>
<dbReference type="PDBsum" id="5PGI"/>
<dbReference type="PDBsum" id="5PGJ"/>
<dbReference type="PDBsum" id="5PGK"/>
<dbReference type="PDBsum" id="5PGL"/>
<dbReference type="PDBsum" id="5PGN"/>
<dbReference type="PDBsum" id="5PGO"/>
<dbReference type="PDBsum" id="5PGP"/>
<dbReference type="PDBsum" id="5PGQ"/>
<dbReference type="PDBsum" id="5PGR"/>
<dbReference type="PDBsum" id="5PGS"/>
<dbReference type="PDBsum" id="5PGT"/>
<dbReference type="PDBsum" id="6FGT"/>
<dbReference type="PDBsum" id="6FGU"/>
<dbReference type="PDBsum" id="6FH6"/>
<dbReference type="PDBsum" id="6FH7"/>
<dbReference type="PDBsum" id="6FHQ"/>
<dbReference type="PDBsum" id="6FI1"/>
<dbReference type="PDBsum" id="7Q42"/>
<dbReference type="PDBsum" id="7WIN"/>
<dbReference type="SMR" id="Q9UIF8"/>
<dbReference type="BioGRID" id="119019">
    <property type="interactions" value="59"/>
</dbReference>
<dbReference type="FunCoup" id="Q9UIF8">
    <property type="interactions" value="2592"/>
</dbReference>
<dbReference type="IntAct" id="Q9UIF8">
    <property type="interactions" value="44"/>
</dbReference>
<dbReference type="MINT" id="Q9UIF8"/>
<dbReference type="STRING" id="9606.ENSP00000376534"/>
<dbReference type="BindingDB" id="Q9UIF8"/>
<dbReference type="ChEMBL" id="CHEMBL1741220"/>
<dbReference type="GuidetoPHARMACOLOGY" id="2722"/>
<dbReference type="GlyGen" id="Q9UIF8">
    <property type="glycosylation" value="9 sites, 1 O-linked glycan (6 sites)"/>
</dbReference>
<dbReference type="iPTMnet" id="Q9UIF8"/>
<dbReference type="PhosphoSitePlus" id="Q9UIF8"/>
<dbReference type="BioMuta" id="BAZ2B"/>
<dbReference type="DMDM" id="229462995"/>
<dbReference type="jPOST" id="Q9UIF8"/>
<dbReference type="MassIVE" id="Q9UIF8"/>
<dbReference type="PaxDb" id="9606-ENSP00000376534"/>
<dbReference type="PeptideAtlas" id="Q9UIF8"/>
<dbReference type="ProteomicsDB" id="84506">
    <molecule id="Q9UIF8-1"/>
</dbReference>
<dbReference type="ProteomicsDB" id="84507">
    <molecule id="Q9UIF8-2"/>
</dbReference>
<dbReference type="ProteomicsDB" id="84508">
    <molecule id="Q9UIF8-3"/>
</dbReference>
<dbReference type="ProteomicsDB" id="84509">
    <molecule id="Q9UIF8-4"/>
</dbReference>
<dbReference type="ProteomicsDB" id="84510">
    <molecule id="Q9UIF8-5"/>
</dbReference>
<dbReference type="Pumba" id="Q9UIF8"/>
<dbReference type="ABCD" id="Q9UIF8">
    <property type="antibodies" value="1 sequenced antibody"/>
</dbReference>
<dbReference type="Antibodypedia" id="19022">
    <property type="antibodies" value="129 antibodies from 26 providers"/>
</dbReference>
<dbReference type="DNASU" id="29994"/>
<dbReference type="Ensembl" id="ENST00000392782.5">
    <molecule id="Q9UIF8-5"/>
    <property type="protein sequence ID" value="ENSP00000376533.1"/>
    <property type="gene ID" value="ENSG00000123636.20"/>
</dbReference>
<dbReference type="Ensembl" id="ENST00000392783.7">
    <molecule id="Q9UIF8-1"/>
    <property type="protein sequence ID" value="ENSP00000376534.2"/>
    <property type="gene ID" value="ENSG00000123636.20"/>
</dbReference>
<dbReference type="GeneID" id="29994"/>
<dbReference type="KEGG" id="hsa:29994"/>
<dbReference type="MANE-Select" id="ENST00000392783.7">
    <property type="protein sequence ID" value="ENSP00000376534.2"/>
    <property type="RefSeq nucleotide sequence ID" value="NM_013450.4"/>
    <property type="RefSeq protein sequence ID" value="NP_038478.2"/>
</dbReference>
<dbReference type="UCSC" id="uc002uao.4">
    <molecule id="Q9UIF8-1"/>
    <property type="organism name" value="human"/>
</dbReference>
<dbReference type="AGR" id="HGNC:963"/>
<dbReference type="CTD" id="29994"/>
<dbReference type="DisGeNET" id="29994"/>
<dbReference type="GeneCards" id="BAZ2B"/>
<dbReference type="HGNC" id="HGNC:963">
    <property type="gene designation" value="BAZ2B"/>
</dbReference>
<dbReference type="HPA" id="ENSG00000123636">
    <property type="expression patterns" value="Low tissue specificity"/>
</dbReference>
<dbReference type="MalaCards" id="BAZ2B"/>
<dbReference type="MIM" id="605683">
    <property type="type" value="gene"/>
</dbReference>
<dbReference type="neXtProt" id="NX_Q9UIF8"/>
<dbReference type="OpenTargets" id="ENSG00000123636"/>
<dbReference type="PharmGKB" id="PA25273"/>
<dbReference type="VEuPathDB" id="HostDB:ENSG00000123636"/>
<dbReference type="eggNOG" id="KOG1245">
    <property type="taxonomic scope" value="Eukaryota"/>
</dbReference>
<dbReference type="GeneTree" id="ENSGT00940000155359"/>
<dbReference type="HOGENOM" id="CLU_000899_0_0_1"/>
<dbReference type="InParanoid" id="Q9UIF8"/>
<dbReference type="OMA" id="NCSNIDH"/>
<dbReference type="OrthoDB" id="21449at2759"/>
<dbReference type="PAN-GO" id="Q9UIF8">
    <property type="GO annotations" value="0 GO annotations based on evolutionary models"/>
</dbReference>
<dbReference type="PhylomeDB" id="Q9UIF8"/>
<dbReference type="TreeFam" id="TF329083"/>
<dbReference type="PathwayCommons" id="Q9UIF8"/>
<dbReference type="SignaLink" id="Q9UIF8"/>
<dbReference type="SIGNOR" id="Q9UIF8"/>
<dbReference type="BioGRID-ORCS" id="29994">
    <property type="hits" value="18 hits in 1175 CRISPR screens"/>
</dbReference>
<dbReference type="ChiTaRS" id="BAZ2B">
    <property type="organism name" value="human"/>
</dbReference>
<dbReference type="EvolutionaryTrace" id="Q9UIF8"/>
<dbReference type="GenomeRNAi" id="29994"/>
<dbReference type="Pharos" id="Q9UIF8">
    <property type="development level" value="Tchem"/>
</dbReference>
<dbReference type="PRO" id="PR:Q9UIF8"/>
<dbReference type="Proteomes" id="UP000005640">
    <property type="component" value="Chromosome 2"/>
</dbReference>
<dbReference type="RNAct" id="Q9UIF8">
    <property type="molecule type" value="protein"/>
</dbReference>
<dbReference type="Bgee" id="ENSG00000123636">
    <property type="expression patterns" value="Expressed in sural nerve and 203 other cell types or tissues"/>
</dbReference>
<dbReference type="ExpressionAtlas" id="Q9UIF8">
    <property type="expression patterns" value="baseline and differential"/>
</dbReference>
<dbReference type="GO" id="GO:0000785">
    <property type="term" value="C:chromatin"/>
    <property type="evidence" value="ECO:0000318"/>
    <property type="project" value="GO_Central"/>
</dbReference>
<dbReference type="GO" id="GO:0005634">
    <property type="term" value="C:nucleus"/>
    <property type="evidence" value="ECO:0000314"/>
    <property type="project" value="UniProtKB"/>
</dbReference>
<dbReference type="GO" id="GO:0003677">
    <property type="term" value="F:DNA binding"/>
    <property type="evidence" value="ECO:0007669"/>
    <property type="project" value="UniProtKB-KW"/>
</dbReference>
<dbReference type="GO" id="GO:0008270">
    <property type="term" value="F:zinc ion binding"/>
    <property type="evidence" value="ECO:0007669"/>
    <property type="project" value="UniProtKB-KW"/>
</dbReference>
<dbReference type="GO" id="GO:0006338">
    <property type="term" value="P:chromatin remodeling"/>
    <property type="evidence" value="ECO:0000304"/>
    <property type="project" value="BHF-UCL"/>
</dbReference>
<dbReference type="GO" id="GO:0006357">
    <property type="term" value="P:regulation of transcription by RNA polymerase II"/>
    <property type="evidence" value="ECO:0000303"/>
    <property type="project" value="BHF-UCL"/>
</dbReference>
<dbReference type="CDD" id="cd05503">
    <property type="entry name" value="Bromo_BAZ2A_B_like"/>
    <property type="match status" value="1"/>
</dbReference>
<dbReference type="CDD" id="cd01397">
    <property type="entry name" value="HAT_MBD"/>
    <property type="match status" value="1"/>
</dbReference>
<dbReference type="CDD" id="cd15630">
    <property type="entry name" value="PHD_BAZ2B"/>
    <property type="match status" value="1"/>
</dbReference>
<dbReference type="FunFam" id="3.30.40.10:FF:000199">
    <property type="entry name" value="Bromodomain adjacent to zinc finger domain 2B"/>
    <property type="match status" value="1"/>
</dbReference>
<dbReference type="FunFam" id="1.20.920.10:FF:000023">
    <property type="entry name" value="Bromodomain adjacent to zinc finger domain protein 2B"/>
    <property type="match status" value="1"/>
</dbReference>
<dbReference type="FunFam" id="3.30.890.10:FF:000002">
    <property type="entry name" value="Bromodomain adjacent to zinc finger domain protein 2B"/>
    <property type="match status" value="1"/>
</dbReference>
<dbReference type="Gene3D" id="1.20.920.10">
    <property type="entry name" value="Bromodomain-like"/>
    <property type="match status" value="1"/>
</dbReference>
<dbReference type="Gene3D" id="3.30.890.10">
    <property type="entry name" value="Methyl-cpg-binding Protein 2, Chain A"/>
    <property type="match status" value="1"/>
</dbReference>
<dbReference type="Gene3D" id="3.30.40.10">
    <property type="entry name" value="Zinc/RING finger domain, C3HC4 (zinc finger)"/>
    <property type="match status" value="1"/>
</dbReference>
<dbReference type="InterPro" id="IPR037374">
    <property type="entry name" value="BAZ2A/B_Bromo"/>
</dbReference>
<dbReference type="InterPro" id="IPR001487">
    <property type="entry name" value="Bromodomain"/>
</dbReference>
<dbReference type="InterPro" id="IPR036427">
    <property type="entry name" value="Bromodomain-like_sf"/>
</dbReference>
<dbReference type="InterPro" id="IPR018359">
    <property type="entry name" value="Bromodomain_CS"/>
</dbReference>
<dbReference type="InterPro" id="IPR018501">
    <property type="entry name" value="DDT_dom"/>
</dbReference>
<dbReference type="InterPro" id="IPR016177">
    <property type="entry name" value="DNA-bd_dom_sf"/>
</dbReference>
<dbReference type="InterPro" id="IPR001739">
    <property type="entry name" value="Methyl_CpG_DNA-bd"/>
</dbReference>
<dbReference type="InterPro" id="IPR028941">
    <property type="entry name" value="WHIM2_dom"/>
</dbReference>
<dbReference type="InterPro" id="IPR011011">
    <property type="entry name" value="Znf_FYVE_PHD"/>
</dbReference>
<dbReference type="InterPro" id="IPR001965">
    <property type="entry name" value="Znf_PHD"/>
</dbReference>
<dbReference type="InterPro" id="IPR019787">
    <property type="entry name" value="Znf_PHD-finger"/>
</dbReference>
<dbReference type="InterPro" id="IPR013083">
    <property type="entry name" value="Znf_RING/FYVE/PHD"/>
</dbReference>
<dbReference type="PANTHER" id="PTHR45915:SF1">
    <property type="entry name" value="BROMODOMAIN ADJACENT TO ZINC FINGER DOMAIN PROTEIN 2B"/>
    <property type="match status" value="1"/>
</dbReference>
<dbReference type="PANTHER" id="PTHR45915">
    <property type="entry name" value="TRANSCRIPTION INTERMEDIARY FACTOR"/>
    <property type="match status" value="1"/>
</dbReference>
<dbReference type="Pfam" id="PF00439">
    <property type="entry name" value="Bromodomain"/>
    <property type="match status" value="1"/>
</dbReference>
<dbReference type="Pfam" id="PF02791">
    <property type="entry name" value="DDT"/>
    <property type="match status" value="1"/>
</dbReference>
<dbReference type="Pfam" id="PF01429">
    <property type="entry name" value="MBD"/>
    <property type="match status" value="1"/>
</dbReference>
<dbReference type="Pfam" id="PF00628">
    <property type="entry name" value="PHD"/>
    <property type="match status" value="1"/>
</dbReference>
<dbReference type="Pfam" id="PF15613">
    <property type="entry name" value="WSD"/>
    <property type="match status" value="1"/>
</dbReference>
<dbReference type="PRINTS" id="PR00503">
    <property type="entry name" value="BROMODOMAIN"/>
</dbReference>
<dbReference type="SMART" id="SM00297">
    <property type="entry name" value="BROMO"/>
    <property type="match status" value="1"/>
</dbReference>
<dbReference type="SMART" id="SM00571">
    <property type="entry name" value="DDT"/>
    <property type="match status" value="1"/>
</dbReference>
<dbReference type="SMART" id="SM00391">
    <property type="entry name" value="MBD"/>
    <property type="match status" value="1"/>
</dbReference>
<dbReference type="SMART" id="SM00249">
    <property type="entry name" value="PHD"/>
    <property type="match status" value="1"/>
</dbReference>
<dbReference type="SUPFAM" id="SSF47370">
    <property type="entry name" value="Bromodomain"/>
    <property type="match status" value="1"/>
</dbReference>
<dbReference type="SUPFAM" id="SSF54171">
    <property type="entry name" value="DNA-binding domain"/>
    <property type="match status" value="1"/>
</dbReference>
<dbReference type="SUPFAM" id="SSF57903">
    <property type="entry name" value="FYVE/PHD zinc finger"/>
    <property type="match status" value="1"/>
</dbReference>
<dbReference type="PROSITE" id="PS00633">
    <property type="entry name" value="BROMODOMAIN_1"/>
    <property type="match status" value="1"/>
</dbReference>
<dbReference type="PROSITE" id="PS50014">
    <property type="entry name" value="BROMODOMAIN_2"/>
    <property type="match status" value="1"/>
</dbReference>
<dbReference type="PROSITE" id="PS50827">
    <property type="entry name" value="DDT"/>
    <property type="match status" value="1"/>
</dbReference>
<dbReference type="PROSITE" id="PS50982">
    <property type="entry name" value="MBD"/>
    <property type="match status" value="1"/>
</dbReference>
<dbReference type="PROSITE" id="PS50016">
    <property type="entry name" value="ZF_PHD_2"/>
    <property type="match status" value="1"/>
</dbReference>
<proteinExistence type="evidence at protein level"/>
<reference key="1">
    <citation type="journal article" date="2000" name="Genomics">
        <title>A novel family of bromodomain genes.</title>
        <authorList>
            <person name="Jones M.H."/>
            <person name="Hamana N."/>
            <person name="Nezu J."/>
            <person name="Shimane M."/>
        </authorList>
    </citation>
    <scope>NUCLEOTIDE SEQUENCE [MRNA] (ISOFORM 4)</scope>
    <source>
        <tissue>Testis</tissue>
    </source>
</reference>
<reference key="2">
    <citation type="journal article" date="2000" name="DNA Res.">
        <title>Prediction of the coding sequences of unidentified human genes. XVII. The complete sequences of 100 new cDNA clones from brain which code for large proteins in vitro.</title>
        <authorList>
            <person name="Nagase T."/>
            <person name="Kikuno R."/>
            <person name="Ishikawa K."/>
            <person name="Hirosawa M."/>
            <person name="Ohara O."/>
        </authorList>
    </citation>
    <scope>NUCLEOTIDE SEQUENCE [LARGE SCALE MRNA] (ISOFORM 5)</scope>
    <source>
        <tissue>Brain</tissue>
    </source>
</reference>
<reference key="3">
    <citation type="submission" date="2003-04" db="EMBL/GenBank/DDBJ databases">
        <authorList>
            <person name="Ohara O."/>
            <person name="Nagase T."/>
            <person name="Kikuno R."/>
        </authorList>
    </citation>
    <scope>SEQUENCE REVISION</scope>
</reference>
<reference key="4">
    <citation type="submission" date="2005-09" db="EMBL/GenBank/DDBJ databases">
        <authorList>
            <person name="Mural R.J."/>
            <person name="Istrail S."/>
            <person name="Sutton G.G."/>
            <person name="Florea L."/>
            <person name="Halpern A.L."/>
            <person name="Mobarry C.M."/>
            <person name="Lippert R."/>
            <person name="Walenz B."/>
            <person name="Shatkay H."/>
            <person name="Dew I."/>
            <person name="Miller J.R."/>
            <person name="Flanigan M.J."/>
            <person name="Edwards N.J."/>
            <person name="Bolanos R."/>
            <person name="Fasulo D."/>
            <person name="Halldorsson B.V."/>
            <person name="Hannenhalli S."/>
            <person name="Turner R."/>
            <person name="Yooseph S."/>
            <person name="Lu F."/>
            <person name="Nusskern D.R."/>
            <person name="Shue B.C."/>
            <person name="Zheng X.H."/>
            <person name="Zhong F."/>
            <person name="Delcher A.L."/>
            <person name="Huson D.H."/>
            <person name="Kravitz S.A."/>
            <person name="Mouchard L."/>
            <person name="Reinert K."/>
            <person name="Remington K.A."/>
            <person name="Clark A.G."/>
            <person name="Waterman M.S."/>
            <person name="Eichler E.E."/>
            <person name="Adams M.D."/>
            <person name="Hunkapiller M.W."/>
            <person name="Myers E.W."/>
            <person name="Venter J.C."/>
        </authorList>
    </citation>
    <scope>NUCLEOTIDE SEQUENCE [LARGE SCALE GENOMIC DNA]</scope>
</reference>
<reference key="5">
    <citation type="journal article" date="2007" name="BMC Genomics">
        <title>The full-ORF clone resource of the German cDNA consortium.</title>
        <authorList>
            <person name="Bechtel S."/>
            <person name="Rosenfelder H."/>
            <person name="Duda A."/>
            <person name="Schmidt C.P."/>
            <person name="Ernst U."/>
            <person name="Wellenreuther R."/>
            <person name="Mehrle A."/>
            <person name="Schuster C."/>
            <person name="Bahr A."/>
            <person name="Bloecker H."/>
            <person name="Heubner D."/>
            <person name="Hoerlein A."/>
            <person name="Michel G."/>
            <person name="Wedler H."/>
            <person name="Koehrer K."/>
            <person name="Ottenwaelder B."/>
            <person name="Poustka A."/>
            <person name="Wiemann S."/>
            <person name="Schupp I."/>
        </authorList>
    </citation>
    <scope>NUCLEOTIDE SEQUENCE [LARGE SCALE MRNA] OF 1-967 (ISOFORM 1)</scope>
    <scope>NUCLEOTIDE SEQUENCE [LARGE SCALE MRNA] OF 1720-2168 (ISOFORMS 1/2/3/4/5)</scope>
    <scope>VARIANTS THR-71 AND SER-422</scope>
    <source>
        <tissue>Melanoma</tissue>
        <tissue>Testis</tissue>
    </source>
</reference>
<reference key="6">
    <citation type="journal article" date="2004" name="Genome Res.">
        <title>The status, quality, and expansion of the NIH full-length cDNA project: the Mammalian Gene Collection (MGC).</title>
        <authorList>
            <consortium name="The MGC Project Team"/>
        </authorList>
    </citation>
    <scope>NUCLEOTIDE SEQUENCE [LARGE SCALE MRNA] OF 95-986 (ISOFORM 2)</scope>
    <scope>VARIANT SER-422</scope>
    <source>
        <tissue>Skeletal muscle</tissue>
    </source>
</reference>
<reference key="7">
    <citation type="journal article" date="2004" name="Nat. Genet.">
        <title>Complete sequencing and characterization of 21,243 full-length human cDNAs.</title>
        <authorList>
            <person name="Ota T."/>
            <person name="Suzuki Y."/>
            <person name="Nishikawa T."/>
            <person name="Otsuki T."/>
            <person name="Sugiyama T."/>
            <person name="Irie R."/>
            <person name="Wakamatsu A."/>
            <person name="Hayashi K."/>
            <person name="Sato H."/>
            <person name="Nagai K."/>
            <person name="Kimura K."/>
            <person name="Makita H."/>
            <person name="Sekine M."/>
            <person name="Obayashi M."/>
            <person name="Nishi T."/>
            <person name="Shibahara T."/>
            <person name="Tanaka T."/>
            <person name="Ishii S."/>
            <person name="Yamamoto J."/>
            <person name="Saito K."/>
            <person name="Kawai Y."/>
            <person name="Isono Y."/>
            <person name="Nakamura Y."/>
            <person name="Nagahari K."/>
            <person name="Murakami K."/>
            <person name="Yasuda T."/>
            <person name="Iwayanagi T."/>
            <person name="Wagatsuma M."/>
            <person name="Shiratori A."/>
            <person name="Sudo H."/>
            <person name="Hosoiri T."/>
            <person name="Kaku Y."/>
            <person name="Kodaira H."/>
            <person name="Kondo H."/>
            <person name="Sugawara M."/>
            <person name="Takahashi M."/>
            <person name="Kanda K."/>
            <person name="Yokoi T."/>
            <person name="Furuya T."/>
            <person name="Kikkawa E."/>
            <person name="Omura Y."/>
            <person name="Abe K."/>
            <person name="Kamihara K."/>
            <person name="Katsuta N."/>
            <person name="Sato K."/>
            <person name="Tanikawa M."/>
            <person name="Yamazaki M."/>
            <person name="Ninomiya K."/>
            <person name="Ishibashi T."/>
            <person name="Yamashita H."/>
            <person name="Murakawa K."/>
            <person name="Fujimori K."/>
            <person name="Tanai H."/>
            <person name="Kimata M."/>
            <person name="Watanabe M."/>
            <person name="Hiraoka S."/>
            <person name="Chiba Y."/>
            <person name="Ishida S."/>
            <person name="Ono Y."/>
            <person name="Takiguchi S."/>
            <person name="Watanabe S."/>
            <person name="Yosida M."/>
            <person name="Hotuta T."/>
            <person name="Kusano J."/>
            <person name="Kanehori K."/>
            <person name="Takahashi-Fujii A."/>
            <person name="Hara H."/>
            <person name="Tanase T.-O."/>
            <person name="Nomura Y."/>
            <person name="Togiya S."/>
            <person name="Komai F."/>
            <person name="Hara R."/>
            <person name="Takeuchi K."/>
            <person name="Arita M."/>
            <person name="Imose N."/>
            <person name="Musashino K."/>
            <person name="Yuuki H."/>
            <person name="Oshima A."/>
            <person name="Sasaki N."/>
            <person name="Aotsuka S."/>
            <person name="Yoshikawa Y."/>
            <person name="Matsunawa H."/>
            <person name="Ichihara T."/>
            <person name="Shiohata N."/>
            <person name="Sano S."/>
            <person name="Moriya S."/>
            <person name="Momiyama H."/>
            <person name="Satoh N."/>
            <person name="Takami S."/>
            <person name="Terashima Y."/>
            <person name="Suzuki O."/>
            <person name="Nakagawa S."/>
            <person name="Senoh A."/>
            <person name="Mizoguchi H."/>
            <person name="Goto Y."/>
            <person name="Shimizu F."/>
            <person name="Wakebe H."/>
            <person name="Hishigaki H."/>
            <person name="Watanabe T."/>
            <person name="Sugiyama A."/>
            <person name="Takemoto M."/>
            <person name="Kawakami B."/>
            <person name="Yamazaki M."/>
            <person name="Watanabe K."/>
            <person name="Kumagai A."/>
            <person name="Itakura S."/>
            <person name="Fukuzumi Y."/>
            <person name="Fujimori Y."/>
            <person name="Komiyama M."/>
            <person name="Tashiro H."/>
            <person name="Tanigami A."/>
            <person name="Fujiwara T."/>
            <person name="Ono T."/>
            <person name="Yamada K."/>
            <person name="Fujii Y."/>
            <person name="Ozaki K."/>
            <person name="Hirao M."/>
            <person name="Ohmori Y."/>
            <person name="Kawabata A."/>
            <person name="Hikiji T."/>
            <person name="Kobatake N."/>
            <person name="Inagaki H."/>
            <person name="Ikema Y."/>
            <person name="Okamoto S."/>
            <person name="Okitani R."/>
            <person name="Kawakami T."/>
            <person name="Noguchi S."/>
            <person name="Itoh T."/>
            <person name="Shigeta K."/>
            <person name="Senba T."/>
            <person name="Matsumura K."/>
            <person name="Nakajima Y."/>
            <person name="Mizuno T."/>
            <person name="Morinaga M."/>
            <person name="Sasaki M."/>
            <person name="Togashi T."/>
            <person name="Oyama M."/>
            <person name="Hata H."/>
            <person name="Watanabe M."/>
            <person name="Komatsu T."/>
            <person name="Mizushima-Sugano J."/>
            <person name="Satoh T."/>
            <person name="Shirai Y."/>
            <person name="Takahashi Y."/>
            <person name="Nakagawa K."/>
            <person name="Okumura K."/>
            <person name="Nagase T."/>
            <person name="Nomura N."/>
            <person name="Kikuchi H."/>
            <person name="Masuho Y."/>
            <person name="Yamashita R."/>
            <person name="Nakai K."/>
            <person name="Yada T."/>
            <person name="Nakamura Y."/>
            <person name="Ohara O."/>
            <person name="Isogai T."/>
            <person name="Sugano S."/>
        </authorList>
    </citation>
    <scope>NUCLEOTIDE SEQUENCE [LARGE SCALE MRNA] OF 670-1411 (ISOFORM 3)</scope>
</reference>
<reference key="8">
    <citation type="journal article" date="2006" name="Cell">
        <title>Global, in vivo, and site-specific phosphorylation dynamics in signaling networks.</title>
        <authorList>
            <person name="Olsen J.V."/>
            <person name="Blagoev B."/>
            <person name="Gnad F."/>
            <person name="Macek B."/>
            <person name="Kumar C."/>
            <person name="Mortensen P."/>
            <person name="Mann M."/>
        </authorList>
    </citation>
    <scope>IDENTIFICATION BY MASS SPECTROMETRY [LARGE SCALE ANALYSIS]</scope>
    <source>
        <tissue>Cervix carcinoma</tissue>
    </source>
</reference>
<reference key="9">
    <citation type="journal article" date="2009" name="Science">
        <title>Lysine acetylation targets protein complexes and co-regulates major cellular functions.</title>
        <authorList>
            <person name="Choudhary C."/>
            <person name="Kumar C."/>
            <person name="Gnad F."/>
            <person name="Nielsen M.L."/>
            <person name="Rehman M."/>
            <person name="Walther T.C."/>
            <person name="Olsen J.V."/>
            <person name="Mann M."/>
        </authorList>
    </citation>
    <scope>ACETYLATION [LARGE SCALE ANALYSIS] AT LYS-1462</scope>
    <scope>IDENTIFICATION BY MASS SPECTROMETRY [LARGE SCALE ANALYSIS]</scope>
</reference>
<reference key="10">
    <citation type="journal article" date="2011" name="Sci. Signal.">
        <title>System-wide temporal characterization of the proteome and phosphoproteome of human embryonic stem cell differentiation.</title>
        <authorList>
            <person name="Rigbolt K.T."/>
            <person name="Prokhorova T.A."/>
            <person name="Akimov V."/>
            <person name="Henningsen J."/>
            <person name="Johansen P.T."/>
            <person name="Kratchmarova I."/>
            <person name="Kassem M."/>
            <person name="Mann M."/>
            <person name="Olsen J.V."/>
            <person name="Blagoev B."/>
        </authorList>
    </citation>
    <scope>PHOSPHORYLATION [LARGE SCALE ANALYSIS] AT SER-1680; THR-2014 AND SER-2019</scope>
    <scope>IDENTIFICATION BY MASS SPECTROMETRY [LARGE SCALE ANALYSIS]</scope>
</reference>
<reference key="11">
    <citation type="journal article" date="2013" name="J. Proteome Res.">
        <title>Toward a comprehensive characterization of a human cancer cell phosphoproteome.</title>
        <authorList>
            <person name="Zhou H."/>
            <person name="Di Palma S."/>
            <person name="Preisinger C."/>
            <person name="Peng M."/>
            <person name="Polat A.N."/>
            <person name="Heck A.J."/>
            <person name="Mohammed S."/>
        </authorList>
    </citation>
    <scope>PHOSPHORYLATION [LARGE SCALE ANALYSIS] AT SER-1465 AND SER-1467</scope>
    <scope>IDENTIFICATION BY MASS SPECTROMETRY [LARGE SCALE ANALYSIS]</scope>
    <source>
        <tissue>Erythroleukemia</tissue>
    </source>
</reference>
<reference key="12">
    <citation type="journal article" date="2015" name="Genes Dev.">
        <title>Screen identifies bromodomain protein ZMYND8 in chromatin recognition of transcription-associated DNA damage that promotes homologous recombination.</title>
        <authorList>
            <person name="Gong F."/>
            <person name="Chiu L.Y."/>
            <person name="Cox B."/>
            <person name="Aymard F."/>
            <person name="Clouaire T."/>
            <person name="Leung J.W."/>
            <person name="Cammarata M."/>
            <person name="Perez M."/>
            <person name="Agarwal P."/>
            <person name="Brodbelt J.S."/>
            <person name="Legube G."/>
            <person name="Miller K.M."/>
        </authorList>
    </citation>
    <scope>SUBCELLULAR LOCATION</scope>
</reference>
<reference key="13">
    <citation type="journal article" date="2017" name="EMBO Rep.">
        <title>Expansion of the ISWI chromatin remodeler family with new active complexes.</title>
        <authorList>
            <person name="Oppikofer M."/>
            <person name="Bai T."/>
            <person name="Gan Y."/>
            <person name="Haley B."/>
            <person name="Liu P."/>
            <person name="Sandoval W."/>
            <person name="Ciferri C."/>
            <person name="Cochran A.G."/>
        </authorList>
    </citation>
    <scope>FUNCTION</scope>
    <scope>IDENTIFICATION IN THE BRF-1 ISWI CHROMATIN REMODELING COMPLEX</scope>
    <scope>IDENTIFICATION IN THE BRF-5 CHROMATIN REMODELING COMPLEX</scope>
    <scope>INTERACTION WITH SMARCA1 AND SMARCA5</scope>
</reference>
<reference key="14">
    <citation type="journal article" date="2017" name="Nat. Struct. Mol. Biol.">
        <title>Site-specific mapping of the human SUMO proteome reveals co-modification with phosphorylation.</title>
        <authorList>
            <person name="Hendriks I.A."/>
            <person name="Lyon D."/>
            <person name="Young C."/>
            <person name="Jensen L.J."/>
            <person name="Vertegaal A.C."/>
            <person name="Nielsen M.L."/>
        </authorList>
    </citation>
    <scope>SUMOYLATION [LARGE SCALE ANALYSIS] AT LYS-1425</scope>
    <scope>IDENTIFICATION BY MASS SPECTROMETRY [LARGE SCALE ANALYSIS]</scope>
</reference>
<reference key="15">
    <citation type="submission" date="2007-07" db="PDB data bank">
        <title>Solution structure of the bromodomain from human bromodomain adjacent to zinc finger domain 2B.</title>
        <authorList>
            <consortium name="RIKEN structural genomics initiative (RSGI)"/>
        </authorList>
    </citation>
    <scope>STRUCTURE BY NMR OF 2062-2166</scope>
</reference>
<reference key="16">
    <citation type="journal article" date="2012" name="Cell">
        <title>Histone recognition and large-scale structural analysis of the human bromodomain family.</title>
        <authorList>
            <person name="Filippakopoulos P."/>
            <person name="Picaud S."/>
            <person name="Mangos M."/>
            <person name="Keates T."/>
            <person name="Lambert J.P."/>
            <person name="Barsyte-Lovejoy D."/>
            <person name="Felletar I."/>
            <person name="Volkmer R."/>
            <person name="Muller S."/>
            <person name="Pawson T."/>
            <person name="Gingras A.C."/>
            <person name="Arrowsmith C.H."/>
            <person name="Knapp S."/>
        </authorList>
    </citation>
    <scope>X-RAY CRYSTALLOGRAPHY (2.03 ANGSTROMS) OF 2054-2168</scope>
    <scope>SUBUNIT</scope>
</reference>
<keyword id="KW-0002">3D-structure</keyword>
<keyword id="KW-0007">Acetylation</keyword>
<keyword id="KW-0025">Alternative splicing</keyword>
<keyword id="KW-0103">Bromodomain</keyword>
<keyword id="KW-0175">Coiled coil</keyword>
<keyword id="KW-0238">DNA-binding</keyword>
<keyword id="KW-1017">Isopeptide bond</keyword>
<keyword id="KW-0479">Metal-binding</keyword>
<keyword id="KW-0539">Nucleus</keyword>
<keyword id="KW-0597">Phosphoprotein</keyword>
<keyword id="KW-1267">Proteomics identification</keyword>
<keyword id="KW-1185">Reference proteome</keyword>
<keyword id="KW-0804">Transcription</keyword>
<keyword id="KW-0805">Transcription regulation</keyword>
<keyword id="KW-0832">Ubl conjugation</keyword>
<keyword id="KW-0862">Zinc</keyword>
<keyword id="KW-0863">Zinc-finger</keyword>
<gene>
    <name type="primary">BAZ2B</name>
    <name type="synonym">KIAA1476</name>
</gene>
<organism>
    <name type="scientific">Homo sapiens</name>
    <name type="common">Human</name>
    <dbReference type="NCBI Taxonomy" id="9606"/>
    <lineage>
        <taxon>Eukaryota</taxon>
        <taxon>Metazoa</taxon>
        <taxon>Chordata</taxon>
        <taxon>Craniata</taxon>
        <taxon>Vertebrata</taxon>
        <taxon>Euteleostomi</taxon>
        <taxon>Mammalia</taxon>
        <taxon>Eutheria</taxon>
        <taxon>Euarchontoglires</taxon>
        <taxon>Primates</taxon>
        <taxon>Haplorrhini</taxon>
        <taxon>Catarrhini</taxon>
        <taxon>Hominidae</taxon>
        <taxon>Homo</taxon>
    </lineage>
</organism>